<protein>
    <recommendedName>
        <fullName>Cell division cycle protein 23 homolog</fullName>
    </recommendedName>
    <alternativeName>
        <fullName>Anaphase-promoting complex subunit 8</fullName>
        <shortName>APC8</shortName>
    </alternativeName>
    <alternativeName>
        <fullName>Cyclosome subunit 8</fullName>
    </alternativeName>
</protein>
<gene>
    <name type="primary">CDC23</name>
    <name type="synonym">ANAPC8</name>
</gene>
<accession>Q9UJX2</accession>
<accession>A8K6E5</accession>
<accession>B4E3A2</accession>
<accession>B7WP05</accession>
<accession>D3DQB7</accession>
<accession>O75433</accession>
<accession>Q53FN2</accession>
<accession>Q9BS73</accession>
<keyword id="KW-0002">3D-structure</keyword>
<keyword id="KW-0007">Acetylation</keyword>
<keyword id="KW-0025">Alternative splicing</keyword>
<keyword id="KW-0131">Cell cycle</keyword>
<keyword id="KW-0132">Cell division</keyword>
<keyword id="KW-1017">Isopeptide bond</keyword>
<keyword id="KW-0498">Mitosis</keyword>
<keyword id="KW-0597">Phosphoprotein</keyword>
<keyword id="KW-1267">Proteomics identification</keyword>
<keyword id="KW-1185">Reference proteome</keyword>
<keyword id="KW-0677">Repeat</keyword>
<keyword id="KW-0802">TPR repeat</keyword>
<keyword id="KW-0832">Ubl conjugation</keyword>
<keyword id="KW-0833">Ubl conjugation pathway</keyword>
<name>CDC23_HUMAN</name>
<evidence type="ECO:0000269" key="1">
    <source>
    </source>
</evidence>
<evidence type="ECO:0000269" key="2">
    <source>
    </source>
</evidence>
<evidence type="ECO:0000269" key="3">
    <source>
    </source>
</evidence>
<evidence type="ECO:0000269" key="4">
    <source>
    </source>
</evidence>
<evidence type="ECO:0000269" key="5">
    <source>
    </source>
</evidence>
<evidence type="ECO:0000269" key="6">
    <source>
    </source>
</evidence>
<evidence type="ECO:0000269" key="7">
    <source>
    </source>
</evidence>
<evidence type="ECO:0000269" key="8">
    <source ref="3"/>
</evidence>
<evidence type="ECO:0000303" key="9">
    <source>
    </source>
</evidence>
<evidence type="ECO:0000303" key="10">
    <source>
    </source>
</evidence>
<evidence type="ECO:0000305" key="11"/>
<evidence type="ECO:0007744" key="12">
    <source>
        <dbReference type="PDB" id="4UI9"/>
    </source>
</evidence>
<evidence type="ECO:0007744" key="13">
    <source>
        <dbReference type="PDB" id="5A31"/>
    </source>
</evidence>
<evidence type="ECO:0007744" key="14">
    <source>
    </source>
</evidence>
<evidence type="ECO:0007744" key="15">
    <source>
    </source>
</evidence>
<evidence type="ECO:0007744" key="16">
    <source>
    </source>
</evidence>
<evidence type="ECO:0007744" key="17">
    <source>
    </source>
</evidence>
<evidence type="ECO:0007744" key="18">
    <source>
    </source>
</evidence>
<evidence type="ECO:0007744" key="19">
    <source>
    </source>
</evidence>
<evidence type="ECO:0007744" key="20">
    <source>
    </source>
</evidence>
<evidence type="ECO:0007744" key="21">
    <source>
    </source>
</evidence>
<evidence type="ECO:0007744" key="22">
    <source>
    </source>
</evidence>
<evidence type="ECO:0007744" key="23">
    <source>
    </source>
</evidence>
<evidence type="ECO:0007744" key="24">
    <source>
    </source>
</evidence>
<evidence type="ECO:0007744" key="25">
    <source>
    </source>
</evidence>
<evidence type="ECO:0007829" key="26">
    <source>
        <dbReference type="PDB" id="5G05"/>
    </source>
</evidence>
<evidence type="ECO:0007829" key="27">
    <source>
        <dbReference type="PDB" id="6Q6G"/>
    </source>
</evidence>
<evidence type="ECO:0007829" key="28">
    <source>
        <dbReference type="PDB" id="8PKP"/>
    </source>
</evidence>
<evidence type="ECO:0007829" key="29">
    <source>
        <dbReference type="PDB" id="8TAU"/>
    </source>
</evidence>
<evidence type="ECO:0007829" key="30">
    <source>
        <dbReference type="PDB" id="9GAW"/>
    </source>
</evidence>
<organism>
    <name type="scientific">Homo sapiens</name>
    <name type="common">Human</name>
    <dbReference type="NCBI Taxonomy" id="9606"/>
    <lineage>
        <taxon>Eukaryota</taxon>
        <taxon>Metazoa</taxon>
        <taxon>Chordata</taxon>
        <taxon>Craniata</taxon>
        <taxon>Vertebrata</taxon>
        <taxon>Euteleostomi</taxon>
        <taxon>Mammalia</taxon>
        <taxon>Eutheria</taxon>
        <taxon>Euarchontoglires</taxon>
        <taxon>Primates</taxon>
        <taxon>Haplorrhini</taxon>
        <taxon>Catarrhini</taxon>
        <taxon>Hominidae</taxon>
        <taxon>Homo</taxon>
    </lineage>
</organism>
<comment type="function">
    <text evidence="2 5">Component of the anaphase promoting complex/cyclosome (APC/C), a cell cycle-regulated E3 ubiquitin ligase that controls progression through mitosis and the G1 phase of the cell cycle (PubMed:18485873). The APC/C complex acts by mediating ubiquitination and subsequent degradation of target proteins: it mainly mediates the formation of 'Lys-11'-linked polyubiquitin chains and, to a lower extent, the formation of 'Lys-48'- and 'Lys-63'-linked polyubiquitin chains (PubMed:18485873). The APC/C complex catalyzes assembly of branched 'Lys-11'-/'Lys-48'-linked branched ubiquitin chains on target proteins (PubMed:29033132).</text>
</comment>
<comment type="pathway">
    <text evidence="2 5">Protein modification; protein ubiquitination.</text>
</comment>
<comment type="subunit">
    <text evidence="3 4 6 7">The mammalian APC/C is composed at least of 14 distinct subunits ANAPC1, ANAPC2, CDC27/APC3, ANAPC4, ANAPC5, CDC16/APC6, ANAPC7, CDC23/APC8, ANAPC10, ANAPC11, CDC26/APC12, ANAPC13, ANAPC15 and ANAPC16 that assemble into a complex of at least 19 chains with a combined molecular mass of around 1.2 MDa; APC/C interacts with FZR1 and FBXO5. Interacts with FBXO43; the interaction is direct.</text>
</comment>
<comment type="interaction">
    <interactant intactId="EBI-396137">
        <id>Q9UJX2</id>
    </interactant>
    <interactant intactId="EBI-10322710">
        <id>A8K3Z6</id>
        <label>ANAPC13</label>
    </interactant>
    <organismsDiffer>false</organismsDiffer>
    <experiments>3</experiments>
</comment>
<comment type="interaction">
    <interactant intactId="EBI-396137">
        <id>Q9UJX2</id>
    </interactant>
    <interactant intactId="EBI-2555953">
        <id>Q9BS18</id>
        <label>ANAPC13</label>
    </interactant>
    <organismsDiffer>false</organismsDiffer>
    <experiments>10</experiments>
</comment>
<comment type="interaction">
    <interactant intactId="EBI-396137">
        <id>Q9UJX2</id>
    </interactant>
    <interactant intactId="EBI-17183751">
        <id>X5D778</id>
        <label>ANKRD11</label>
    </interactant>
    <organismsDiffer>false</organismsDiffer>
    <experiments>3</experiments>
</comment>
<comment type="interaction">
    <interactant intactId="EBI-396137">
        <id>Q9UJX2</id>
    </interactant>
    <interactant intactId="EBI-1221934">
        <id>O14791</id>
        <label>APOL1</label>
    </interactant>
    <organismsDiffer>false</organismsDiffer>
    <experiments>3</experiments>
</comment>
<comment type="interaction">
    <interactant intactId="EBI-396137">
        <id>Q9UJX2</id>
    </interactant>
    <interactant intactId="EBI-747353">
        <id>Q8WXE1</id>
        <label>ATRIP</label>
    </interactant>
    <organismsDiffer>false</organismsDiffer>
    <experiments>3</experiments>
</comment>
<comment type="interaction">
    <interactant intactId="EBI-396137">
        <id>Q9UJX2</id>
    </interactant>
    <interactant intactId="EBI-930964">
        <id>P54253</id>
        <label>ATXN1</label>
    </interactant>
    <organismsDiffer>false</organismsDiffer>
    <experiments>6</experiments>
</comment>
<comment type="interaction">
    <interactant intactId="EBI-396137">
        <id>Q9UJX2</id>
    </interactant>
    <interactant intactId="EBI-702390">
        <id>Q9UBB4</id>
        <label>ATXN10</label>
    </interactant>
    <organismsDiffer>false</organismsDiffer>
    <experiments>3</experiments>
</comment>
<comment type="interaction">
    <interactant intactId="EBI-396137">
        <id>Q9UJX2</id>
    </interactant>
    <interactant intactId="EBI-10988864">
        <id>P46379-2</id>
        <label>BAG6</label>
    </interactant>
    <organismsDiffer>false</organismsDiffer>
    <experiments>3</experiments>
</comment>
<comment type="interaction">
    <interactant intactId="EBI-396137">
        <id>Q9UJX2</id>
    </interactant>
    <interactant intactId="EBI-6083685">
        <id>Q9H6U6</id>
        <label>BCAS3</label>
    </interactant>
    <organismsDiffer>false</organismsDiffer>
    <experiments>3</experiments>
</comment>
<comment type="interaction">
    <interactant intactId="EBI-396137">
        <id>Q9UJX2</id>
    </interactant>
    <interactant intactId="EBI-742722">
        <id>Q9BUH8</id>
        <label>BEGAIN</label>
    </interactant>
    <organismsDiffer>false</organismsDiffer>
    <experiments>3</experiments>
</comment>
<comment type="interaction">
    <interactant intactId="EBI-396137">
        <id>Q9UJX2</id>
    </interactant>
    <interactant intactId="EBI-358049">
        <id>Q13895</id>
        <label>BYSL</label>
    </interactant>
    <organismsDiffer>false</organismsDiffer>
    <experiments>5</experiments>
</comment>
<comment type="interaction">
    <interactant intactId="EBI-396137">
        <id>Q9UJX2</id>
    </interactant>
    <interactant intactId="EBI-718729">
        <id>P55212</id>
        <label>CASP6</label>
    </interactant>
    <organismsDiffer>false</organismsDiffer>
    <experiments>3</experiments>
</comment>
<comment type="interaction">
    <interactant intactId="EBI-396137">
        <id>Q9UJX2</id>
    </interactant>
    <interactant intactId="EBI-741724">
        <id>Q8NA61</id>
        <label>CBY2</label>
    </interactant>
    <organismsDiffer>false</organismsDiffer>
    <experiments>3</experiments>
</comment>
<comment type="interaction">
    <interactant intactId="EBI-396137">
        <id>Q9UJX2</id>
    </interactant>
    <interactant intactId="EBI-11977221">
        <id>Q86Z20</id>
        <label>CCDC125</label>
    </interactant>
    <organismsDiffer>false</organismsDiffer>
    <experiments>3</experiments>
</comment>
<comment type="interaction">
    <interactant intactId="EBI-396137">
        <id>Q9UJX2</id>
    </interactant>
    <interactant intactId="EBI-1104933">
        <id>Q8N4L8</id>
        <label>CCDC24</label>
    </interactant>
    <organismsDiffer>false</organismsDiffer>
    <experiments>3</experiments>
</comment>
<comment type="interaction">
    <interactant intactId="EBI-396137">
        <id>Q9UJX2</id>
    </interactant>
    <interactant intactId="EBI-744115">
        <id>Q9C0F1</id>
        <label>CEP44</label>
    </interactant>
    <organismsDiffer>false</organismsDiffer>
    <experiments>3</experiments>
</comment>
<comment type="interaction">
    <interactant intactId="EBI-396137">
        <id>Q9UJX2</id>
    </interactant>
    <interactant intactId="EBI-12261896">
        <id>Q5T4B2</id>
        <label>CERCAM</label>
    </interactant>
    <organismsDiffer>false</organismsDiffer>
    <experiments>3</experiments>
</comment>
<comment type="interaction">
    <interactant intactId="EBI-396137">
        <id>Q9UJX2</id>
    </interactant>
    <interactant intactId="EBI-945751">
        <id>P38432</id>
        <label>COIL</label>
    </interactant>
    <organismsDiffer>false</organismsDiffer>
    <experiments>3</experiments>
</comment>
<comment type="interaction">
    <interactant intactId="EBI-396137">
        <id>Q9UJX2</id>
    </interactant>
    <interactant intactId="EBI-739773">
        <id>Q9BSW2</id>
        <label>CRACR2A</label>
    </interactant>
    <organismsDiffer>false</organismsDiffer>
    <experiments>3</experiments>
</comment>
<comment type="interaction">
    <interactant intactId="EBI-396137">
        <id>Q9UJX2</id>
    </interactant>
    <interactant intactId="EBI-1181987">
        <id>Q53ET0</id>
        <label>CRTC2</label>
    </interactant>
    <organismsDiffer>false</organismsDiffer>
    <experiments>3</experiments>
</comment>
<comment type="interaction">
    <interactant intactId="EBI-396137">
        <id>Q9UJX2</id>
    </interactant>
    <interactant intactId="EBI-744761">
        <id>Q6BCY4</id>
        <label>CYB5R2</label>
    </interactant>
    <organismsDiffer>false</organismsDiffer>
    <experiments>3</experiments>
</comment>
<comment type="interaction">
    <interactant intactId="EBI-396137">
        <id>Q9UJX2</id>
    </interactant>
    <interactant intactId="EBI-12324841">
        <id>O15075-2</id>
        <label>DCLK1</label>
    </interactant>
    <organismsDiffer>false</organismsDiffer>
    <experiments>3</experiments>
</comment>
<comment type="interaction">
    <interactant intactId="EBI-396137">
        <id>Q9UJX2</id>
    </interactant>
    <interactant intactId="EBI-11988027">
        <id>Q9NRI5-2</id>
        <label>DISC1</label>
    </interactant>
    <organismsDiffer>false</organismsDiffer>
    <experiments>3</experiments>
</comment>
<comment type="interaction">
    <interactant intactId="EBI-396137">
        <id>Q9UJX2</id>
    </interactant>
    <interactant intactId="EBI-10976677">
        <id>G5E9A7</id>
        <label>DMWD</label>
    </interactant>
    <organismsDiffer>false</organismsDiffer>
    <experiments>3</experiments>
</comment>
<comment type="interaction">
    <interactant intactId="EBI-396137">
        <id>Q9UJX2</id>
    </interactant>
    <interactant intactId="EBI-12593112">
        <id>O75190-2</id>
        <label>DNAJB6</label>
    </interactant>
    <organismsDiffer>false</organismsDiffer>
    <experiments>3</experiments>
</comment>
<comment type="interaction">
    <interactant intactId="EBI-396137">
        <id>Q9UJX2</id>
    </interactant>
    <interactant intactId="EBI-748028">
        <id>Q9GZV4</id>
        <label>EIF5A2</label>
    </interactant>
    <organismsDiffer>false</organismsDiffer>
    <experiments>3</experiments>
</comment>
<comment type="interaction">
    <interactant intactId="EBI-396137">
        <id>Q9UJX2</id>
    </interactant>
    <interactant intactId="EBI-13371226">
        <id>Q9NYK6-3</id>
        <label>EURL</label>
    </interactant>
    <organismsDiffer>false</organismsDiffer>
    <experiments>3</experiments>
</comment>
<comment type="interaction">
    <interactant intactId="EBI-396137">
        <id>Q9UJX2</id>
    </interactant>
    <interactant intactId="EBI-10175124">
        <id>Q8IZU0</id>
        <label>FAM9B</label>
    </interactant>
    <organismsDiffer>false</organismsDiffer>
    <experiments>3</experiments>
</comment>
<comment type="interaction">
    <interactant intactId="EBI-396137">
        <id>Q9UJX2</id>
    </interactant>
    <interactant intactId="EBI-10173415">
        <id>A4D1I3</id>
        <label>FLJ34048</label>
    </interactant>
    <organismsDiffer>false</organismsDiffer>
    <experiments>3</experiments>
</comment>
<comment type="interaction">
    <interactant intactId="EBI-396137">
        <id>Q9UJX2</id>
    </interactant>
    <interactant intactId="EBI-11319000">
        <id>O15353</id>
        <label>FOXN1</label>
    </interactant>
    <organismsDiffer>false</organismsDiffer>
    <experiments>3</experiments>
</comment>
<comment type="interaction">
    <interactant intactId="EBI-396137">
        <id>Q9UJX2</id>
    </interactant>
    <interactant intactId="EBI-1059030">
        <id>O95073</id>
        <label>FSBP</label>
    </interactant>
    <organismsDiffer>false</organismsDiffer>
    <experiments>3</experiments>
</comment>
<comment type="interaction">
    <interactant intactId="EBI-396137">
        <id>Q9UJX2</id>
    </interactant>
    <interactant intactId="EBI-744302">
        <id>P14136</id>
        <label>GFAP</label>
    </interactant>
    <organismsDiffer>false</organismsDiffer>
    <experiments>3</experiments>
</comment>
<comment type="interaction">
    <interactant intactId="EBI-396137">
        <id>Q9UJX2</id>
    </interactant>
    <interactant intactId="EBI-739467">
        <id>Q9H8Y8</id>
        <label>GORASP2</label>
    </interactant>
    <organismsDiffer>false</organismsDiffer>
    <experiments>9</experiments>
</comment>
<comment type="interaction">
    <interactant intactId="EBI-396137">
        <id>Q9UJX2</id>
    </interactant>
    <interactant intactId="EBI-11519926">
        <id>Q6PI77</id>
        <label>GPRASP3</label>
    </interactant>
    <organismsDiffer>false</organismsDiffer>
    <experiments>3</experiments>
</comment>
<comment type="interaction">
    <interactant intactId="EBI-396137">
        <id>Q9UJX2</id>
    </interactant>
    <interactant intactId="EBI-6912536">
        <id>Q8N3Z3</id>
        <label>GTPBP8</label>
    </interactant>
    <organismsDiffer>false</organismsDiffer>
    <experiments>3</experiments>
</comment>
<comment type="interaction">
    <interactant intactId="EBI-396137">
        <id>Q9UJX2</id>
    </interactant>
    <interactant intactId="EBI-10329202">
        <id>Q9Y5R4</id>
        <label>HEMK1</label>
    </interactant>
    <organismsDiffer>false</organismsDiffer>
    <experiments>3</experiments>
</comment>
<comment type="interaction">
    <interactant intactId="EBI-396137">
        <id>Q9UJX2</id>
    </interactant>
    <interactant intactId="EBI-8638439">
        <id>Q8IYA8</id>
        <label>IHO1</label>
    </interactant>
    <organismsDiffer>false</organismsDiffer>
    <experiments>6</experiments>
</comment>
<comment type="interaction">
    <interactant intactId="EBI-396137">
        <id>Q9UJX2</id>
    </interactant>
    <interactant intactId="EBI-6509505">
        <id>Q0VD86</id>
        <label>INCA1</label>
    </interactant>
    <organismsDiffer>false</organismsDiffer>
    <experiments>3</experiments>
</comment>
<comment type="interaction">
    <interactant intactId="EBI-396137">
        <id>Q9UJX2</id>
    </interactant>
    <interactant intactId="EBI-769401">
        <id>Q8NBZ0</id>
        <label>INO80E</label>
    </interactant>
    <organismsDiffer>false</organismsDiffer>
    <experiments>3</experiments>
</comment>
<comment type="interaction">
    <interactant intactId="EBI-396137">
        <id>Q9UJX2</id>
    </interactant>
    <interactant intactId="EBI-10236940">
        <id>Q15735</id>
        <label>INPP5J</label>
    </interactant>
    <organismsDiffer>false</organismsDiffer>
    <experiments>3</experiments>
</comment>
<comment type="interaction">
    <interactant intactId="EBI-396137">
        <id>Q9UJX2</id>
    </interactant>
    <interactant intactId="EBI-1055254">
        <id>Q8WXH2</id>
        <label>JPH3</label>
    </interactant>
    <organismsDiffer>false</organismsDiffer>
    <experiments>3</experiments>
</comment>
<comment type="interaction">
    <interactant intactId="EBI-396137">
        <id>Q9UJX2</id>
    </interactant>
    <interactant intactId="EBI-2511344">
        <id>Q8NC69</id>
        <label>KCTD6</label>
    </interactant>
    <organismsDiffer>false</organismsDiffer>
    <experiments>6</experiments>
</comment>
<comment type="interaction">
    <interactant intactId="EBI-396137">
        <id>Q9UJX2</id>
    </interactant>
    <interactant intactId="EBI-10975473">
        <id>O60333-2</id>
        <label>KIF1B</label>
    </interactant>
    <organismsDiffer>false</organismsDiffer>
    <experiments>3</experiments>
</comment>
<comment type="interaction">
    <interactant intactId="EBI-396137">
        <id>Q9UJX2</id>
    </interactant>
    <interactant intactId="EBI-948266">
        <id>O14901</id>
        <label>KLF11</label>
    </interactant>
    <organismsDiffer>false</organismsDiffer>
    <experiments>3</experiments>
</comment>
<comment type="interaction">
    <interactant intactId="EBI-396137">
        <id>Q9UJX2</id>
    </interactant>
    <interactant intactId="EBI-11958506">
        <id>O76013-2</id>
        <label>KRT36</label>
    </interactant>
    <organismsDiffer>false</organismsDiffer>
    <experiments>3</experiments>
</comment>
<comment type="interaction">
    <interactant intactId="EBI-396137">
        <id>Q9UJX2</id>
    </interactant>
    <interactant intactId="EBI-21591415">
        <id>P13473-2</id>
        <label>LAMP2</label>
    </interactant>
    <organismsDiffer>false</organismsDiffer>
    <experiments>3</experiments>
</comment>
<comment type="interaction">
    <interactant intactId="EBI-396137">
        <id>Q9UJX2</id>
    </interactant>
    <interactant intactId="EBI-12039345">
        <id>Q9UBR4-2</id>
        <label>LHX3</label>
    </interactant>
    <organismsDiffer>false</organismsDiffer>
    <experiments>3</experiments>
</comment>
<comment type="interaction">
    <interactant intactId="EBI-396137">
        <id>Q9UJX2</id>
    </interactant>
    <interactant intactId="EBI-1216080">
        <id>Q9Y250</id>
        <label>LZTS1</label>
    </interactant>
    <organismsDiffer>false</organismsDiffer>
    <experiments>3</experiments>
</comment>
<comment type="interaction">
    <interactant intactId="EBI-396137">
        <id>Q9UJX2</id>
    </interactant>
    <interactant intactId="EBI-741037">
        <id>Q9BRK4</id>
        <label>LZTS2</label>
    </interactant>
    <organismsDiffer>false</organismsDiffer>
    <experiments>3</experiments>
</comment>
<comment type="interaction">
    <interactant intactId="EBI-396137">
        <id>Q9UJX2</id>
    </interactant>
    <interactant intactId="EBI-716006">
        <id>Q9Y5V3</id>
        <label>MAGED1</label>
    </interactant>
    <organismsDiffer>false</organismsDiffer>
    <experiments>3</experiments>
</comment>
<comment type="interaction">
    <interactant intactId="EBI-396137">
        <id>Q9UJX2</id>
    </interactant>
    <interactant intactId="EBI-8641936">
        <id>Q15742</id>
        <label>NAB2</label>
    </interactant>
    <organismsDiffer>false</organismsDiffer>
    <experiments>3</experiments>
</comment>
<comment type="interaction">
    <interactant intactId="EBI-396137">
        <id>Q9UJX2</id>
    </interactant>
    <interactant intactId="EBI-2362014">
        <id>Q96F24</id>
        <label>NRBF2</label>
    </interactant>
    <organismsDiffer>false</organismsDiffer>
    <experiments>3</experiments>
</comment>
<comment type="interaction">
    <interactant intactId="EBI-396137">
        <id>Q9UJX2</id>
    </interactant>
    <interactant intactId="EBI-741048">
        <id>Q7Z3B4</id>
        <label>NUP54</label>
    </interactant>
    <organismsDiffer>false</organismsDiffer>
    <experiments>3</experiments>
</comment>
<comment type="interaction">
    <interactant intactId="EBI-396137">
        <id>Q9UJX2</id>
    </interactant>
    <interactant intactId="EBI-748974">
        <id>Q96CV9</id>
        <label>OPTN</label>
    </interactant>
    <organismsDiffer>false</organismsDiffer>
    <experiments>8</experiments>
</comment>
<comment type="interaction">
    <interactant intactId="EBI-396137">
        <id>Q9UJX2</id>
    </interactant>
    <interactant intactId="EBI-764534">
        <id>Q16877</id>
        <label>PFKFB4</label>
    </interactant>
    <organismsDiffer>false</organismsDiffer>
    <experiments>3</experiments>
</comment>
<comment type="interaction">
    <interactant intactId="EBI-396137">
        <id>Q9UJX2</id>
    </interactant>
    <interactant intactId="EBI-721853">
        <id>O14832</id>
        <label>PHYH</label>
    </interactant>
    <organismsDiffer>false</organismsDiffer>
    <experiments>3</experiments>
</comment>
<comment type="interaction">
    <interactant intactId="EBI-396137">
        <id>Q9UJX2</id>
    </interactant>
    <interactant intactId="EBI-10232538">
        <id>Q8WWB5</id>
        <label>PIH1D2</label>
    </interactant>
    <organismsDiffer>false</organismsDiffer>
    <experiments>3</experiments>
</comment>
<comment type="interaction">
    <interactant intactId="EBI-396137">
        <id>Q9UJX2</id>
    </interactant>
    <interactant intactId="EBI-10171633">
        <id>Q96PV4</id>
        <label>PNMA5</label>
    </interactant>
    <organismsDiffer>false</organismsDiffer>
    <experiments>3</experiments>
</comment>
<comment type="interaction">
    <interactant intactId="EBI-396137">
        <id>Q9UJX2</id>
    </interactant>
    <interactant intactId="EBI-12029004">
        <id>P78424</id>
        <label>POU6F2</label>
    </interactant>
    <organismsDiffer>false</organismsDiffer>
    <experiments>3</experiments>
</comment>
<comment type="interaction">
    <interactant intactId="EBI-396137">
        <id>Q9UJX2</id>
    </interactant>
    <interactant intactId="EBI-11336487">
        <id>Q2NL68</id>
        <label>PROSER3</label>
    </interactant>
    <organismsDiffer>false</organismsDiffer>
    <experiments>3</experiments>
</comment>
<comment type="interaction">
    <interactant intactId="EBI-396137">
        <id>Q9UJX2</id>
    </interactant>
    <interactant intactId="EBI-1567797">
        <id>Q8WWY3</id>
        <label>PRPF31</label>
    </interactant>
    <organismsDiffer>false</organismsDiffer>
    <experiments>3</experiments>
</comment>
<comment type="interaction">
    <interactant intactId="EBI-396137">
        <id>Q9UJX2</id>
    </interactant>
    <interactant intactId="EBI-5280197">
        <id>O75400-2</id>
        <label>PRPF40A</label>
    </interactant>
    <organismsDiffer>false</organismsDiffer>
    <experiments>3</experiments>
</comment>
<comment type="interaction">
    <interactant intactId="EBI-396137">
        <id>Q9UJX2</id>
    </interactant>
    <interactant intactId="EBI-749195">
        <id>P60891</id>
        <label>PRPS1</label>
    </interactant>
    <organismsDiffer>false</organismsDiffer>
    <experiments>3</experiments>
</comment>
<comment type="interaction">
    <interactant intactId="EBI-396137">
        <id>Q9UJX2</id>
    </interactant>
    <interactant intactId="EBI-413628">
        <id>P63000</id>
        <label>RAC1</label>
    </interactant>
    <organismsDiffer>false</organismsDiffer>
    <experiments>3</experiments>
</comment>
<comment type="interaction">
    <interactant intactId="EBI-396137">
        <id>Q9UJX2</id>
    </interactant>
    <interactant intactId="EBI-10269922">
        <id>Q8NDT2-2</id>
        <label>RBM15B</label>
    </interactant>
    <organismsDiffer>false</organismsDiffer>
    <experiments>3</experiments>
</comment>
<comment type="interaction">
    <interactant intactId="EBI-396137">
        <id>Q9UJX2</id>
    </interactant>
    <interactant intactId="EBI-12806054">
        <id>P10745</id>
        <label>RBP3</label>
    </interactant>
    <organismsDiffer>false</organismsDiffer>
    <experiments>3</experiments>
</comment>
<comment type="interaction">
    <interactant intactId="EBI-396137">
        <id>Q9UJX2</id>
    </interactant>
    <interactant intactId="EBI-740322">
        <id>Q93062</id>
        <label>RBPMS</label>
    </interactant>
    <organismsDiffer>false</organismsDiffer>
    <experiments>4</experiments>
</comment>
<comment type="interaction">
    <interactant intactId="EBI-396137">
        <id>Q9UJX2</id>
    </interactant>
    <interactant intactId="EBI-749321">
        <id>Q9UHA3</id>
        <label>RSL24D1</label>
    </interactant>
    <organismsDiffer>false</organismsDiffer>
    <experiments>3</experiments>
</comment>
<comment type="interaction">
    <interactant intactId="EBI-396137">
        <id>Q9UJX2</id>
    </interactant>
    <interactant intactId="EBI-11984663">
        <id>Q06455-2</id>
        <label>RUNX1T1</label>
    </interactant>
    <organismsDiffer>false</organismsDiffer>
    <experiments>3</experiments>
</comment>
<comment type="interaction">
    <interactant intactId="EBI-396137">
        <id>Q9UJX2</id>
    </interactant>
    <interactant intactId="EBI-747107">
        <id>Q8IUQ4</id>
        <label>SIAH1</label>
    </interactant>
    <organismsDiffer>false</organismsDiffer>
    <experiments>3</experiments>
</comment>
<comment type="interaction">
    <interactant intactId="EBI-396137">
        <id>Q9UJX2</id>
    </interactant>
    <interactant intactId="EBI-10309896">
        <id>Q9HAB3</id>
        <label>SLC52A2</label>
    </interactant>
    <organismsDiffer>false</organismsDiffer>
    <experiments>3</experiments>
</comment>
<comment type="interaction">
    <interactant intactId="EBI-396137">
        <id>Q9UJX2</id>
    </interactant>
    <interactant intactId="EBI-749970">
        <id>Q53HV7</id>
        <label>SMUG1</label>
    </interactant>
    <organismsDiffer>false</organismsDiffer>
    <experiments>3</experiments>
</comment>
<comment type="interaction">
    <interactant intactId="EBI-396137">
        <id>Q9UJX2</id>
    </interactant>
    <interactant intactId="EBI-741237">
        <id>O60504</id>
        <label>SORBS3</label>
    </interactant>
    <organismsDiffer>false</organismsDiffer>
    <experiments>3</experiments>
</comment>
<comment type="interaction">
    <interactant intactId="EBI-396137">
        <id>Q9UJX2</id>
    </interactant>
    <interactant intactId="EBI-3505701">
        <id>P35711</id>
        <label>SOX5</label>
    </interactant>
    <organismsDiffer>false</organismsDiffer>
    <experiments>3</experiments>
</comment>
<comment type="interaction">
    <interactant intactId="EBI-396137">
        <id>Q9UJX2</id>
    </interactant>
    <interactant intactId="EBI-11959123">
        <id>Q99932-2</id>
        <label>SPAG8</label>
    </interactant>
    <organismsDiffer>false</organismsDiffer>
    <experiments>3</experiments>
</comment>
<comment type="interaction">
    <interactant intactId="EBI-396137">
        <id>Q9UJX2</id>
    </interactant>
    <interactant intactId="EBI-5235340">
        <id>Q7Z699</id>
        <label>SPRED1</label>
    </interactant>
    <organismsDiffer>false</organismsDiffer>
    <experiments>3</experiments>
</comment>
<comment type="interaction">
    <interactant intactId="EBI-396137">
        <id>Q9UJX2</id>
    </interactant>
    <interactant intactId="EBI-2212028">
        <id>Q9Y2D8</id>
        <label>SSX2IP</label>
    </interactant>
    <organismsDiffer>false</organismsDiffer>
    <experiments>3</experiments>
</comment>
<comment type="interaction">
    <interactant intactId="EBI-396137">
        <id>Q9UJX2</id>
    </interactant>
    <interactant intactId="EBI-11956649">
        <id>P32856-2</id>
        <label>STX2</label>
    </interactant>
    <organismsDiffer>false</organismsDiffer>
    <experiments>3</experiments>
</comment>
<comment type="interaction">
    <interactant intactId="EBI-396137">
        <id>Q9UJX2</id>
    </interactant>
    <interactant intactId="EBI-372899">
        <id>Q13148</id>
        <label>TARDBP</label>
    </interactant>
    <organismsDiffer>false</organismsDiffer>
    <experiments>3</experiments>
</comment>
<comment type="interaction">
    <interactant intactId="EBI-396137">
        <id>Q9UJX2</id>
    </interactant>
    <interactant intactId="EBI-11139477">
        <id>Q96N21</id>
        <label>TEPSIN</label>
    </interactant>
    <organismsDiffer>false</organismsDiffer>
    <experiments>3</experiments>
</comment>
<comment type="interaction">
    <interactant intactId="EBI-396137">
        <id>Q9UJX2</id>
    </interactant>
    <interactant intactId="EBI-357849">
        <id>Q15025</id>
        <label>TNIP1</label>
    </interactant>
    <organismsDiffer>false</organismsDiffer>
    <experiments>3</experiments>
</comment>
<comment type="interaction">
    <interactant intactId="EBI-396137">
        <id>Q9UJX2</id>
    </interactant>
    <interactant intactId="EBI-25847109">
        <id>O14656-2</id>
        <label>TOR1A</label>
    </interactant>
    <organismsDiffer>false</organismsDiffer>
    <experiments>3</experiments>
</comment>
<comment type="interaction">
    <interactant intactId="EBI-396137">
        <id>Q9UJX2</id>
    </interactant>
    <interactant intactId="EBI-719493">
        <id>P14373</id>
        <label>TRIM27</label>
    </interactant>
    <organismsDiffer>false</organismsDiffer>
    <experiments>4</experiments>
</comment>
<comment type="interaction">
    <interactant intactId="EBI-396137">
        <id>Q9UJX2</id>
    </interactant>
    <interactant intactId="EBI-739485">
        <id>Q9Y3Q8</id>
        <label>TSC22D4</label>
    </interactant>
    <organismsDiffer>false</organismsDiffer>
    <experiments>4</experiments>
</comment>
<comment type="interaction">
    <interactant intactId="EBI-396137">
        <id>Q9UJX2</id>
    </interactant>
    <interactant intactId="EBI-11975223">
        <id>Q70EL1-9</id>
        <label>USP54</label>
    </interactant>
    <organismsDiffer>false</organismsDiffer>
    <experiments>3</experiments>
</comment>
<comment type="alternative products">
    <event type="alternative splicing"/>
    <isoform>
        <id>Q9UJX2-1</id>
        <name>1</name>
        <sequence type="displayed"/>
    </isoform>
    <isoform>
        <id>Q9UJX2-2</id>
        <name>2</name>
        <sequence type="described" ref="VSP_008429 VSP_008430"/>
    </isoform>
    <isoform>
        <id>Q9UJX2-3</id>
        <name>3</name>
        <sequence type="described" ref="VSP_037678"/>
    </isoform>
</comment>
<comment type="PTM">
    <text evidence="1">Phosphorylated. Phosphorylation on Thr-562 occurs specifically during mitosis.</text>
</comment>
<comment type="similarity">
    <text evidence="11">Belongs to the APC8/CDC23 family.</text>
</comment>
<comment type="sequence caution" evidence="11">
    <conflict type="erroneous initiation">
        <sequence resource="EMBL-CDS" id="AAC70920"/>
    </conflict>
</comment>
<comment type="sequence caution" evidence="11">
    <conflict type="erroneous initiation">
        <sequence resource="EMBL-CDS" id="AAH05258"/>
    </conflict>
</comment>
<comment type="sequence caution" evidence="11">
    <conflict type="erroneous initiation">
        <sequence resource="EMBL-CDS" id="AAH10944"/>
    </conflict>
</comment>
<comment type="sequence caution" evidence="11">
    <conflict type="erroneous initiation">
        <sequence resource="EMBL-CDS" id="AAH17713"/>
    </conflict>
</comment>
<comment type="sequence caution" evidence="11">
    <conflict type="erroneous initiation">
        <sequence resource="EMBL-CDS" id="AAS99353"/>
    </conflict>
</comment>
<comment type="sequence caution" evidence="11">
    <conflict type="erroneous initiation">
        <sequence resource="EMBL-CDS" id="BAA75628"/>
    </conflict>
</comment>
<comment type="sequence caution" evidence="11">
    <conflict type="erroneous initiation">
        <sequence resource="EMBL-CDS" id="BAD96970"/>
    </conflict>
</comment>
<comment type="sequence caution" evidence="11">
    <conflict type="erroneous initiation">
        <sequence resource="EMBL-CDS" id="BAF84299"/>
    </conflict>
</comment>
<feature type="initiator methionine" description="Removed" evidence="21">
    <location>
        <position position="1"/>
    </location>
</feature>
<feature type="chain" id="PRO_0000106270" description="Cell division cycle protein 23 homolog">
    <location>
        <begin position="2"/>
        <end position="597"/>
    </location>
</feature>
<feature type="repeat" description="TPR 1">
    <location>
        <begin position="27"/>
        <end position="63"/>
    </location>
</feature>
<feature type="repeat" description="TPR 2">
    <location>
        <begin position="73"/>
        <end position="112"/>
    </location>
</feature>
<feature type="repeat" description="TPR 3">
    <location>
        <begin position="114"/>
        <end position="144"/>
    </location>
</feature>
<feature type="repeat" description="TPR 4">
    <location>
        <begin position="169"/>
        <end position="200"/>
    </location>
</feature>
<feature type="repeat" description="TPR 5">
    <location>
        <begin position="229"/>
        <end position="259"/>
    </location>
</feature>
<feature type="repeat" description="TPR 6">
    <location>
        <begin position="263"/>
        <end position="293"/>
    </location>
</feature>
<feature type="repeat" description="TPR 7">
    <location>
        <begin position="297"/>
        <end position="327"/>
    </location>
</feature>
<feature type="repeat" description="TPR 8">
    <location>
        <begin position="331"/>
        <end position="361"/>
    </location>
</feature>
<feature type="repeat" description="TPR 9">
    <location>
        <begin position="366"/>
        <end position="395"/>
    </location>
</feature>
<feature type="repeat" description="TPR 10">
    <location>
        <begin position="400"/>
        <end position="432"/>
    </location>
</feature>
<feature type="repeat" description="TPR 11">
    <location>
        <begin position="433"/>
        <end position="466"/>
    </location>
</feature>
<feature type="repeat" description="TPR 12">
    <location>
        <begin position="468"/>
        <end position="500"/>
    </location>
</feature>
<feature type="repeat" description="TPR 13">
    <location>
        <begin position="504"/>
        <end position="540"/>
    </location>
</feature>
<feature type="modified residue" description="N-acetylalanine" evidence="21">
    <location>
        <position position="2"/>
    </location>
</feature>
<feature type="modified residue" description="Phosphotyrosine" evidence="1">
    <location>
        <position position="273"/>
    </location>
</feature>
<feature type="modified residue" description="N6-acetyllysine" evidence="17">
    <location>
        <position position="467"/>
    </location>
</feature>
<feature type="modified residue" description="Phosphothreonine" evidence="1 15">
    <location>
        <position position="562"/>
    </location>
</feature>
<feature type="modified residue" description="Phosphothreonine" evidence="1">
    <location>
        <position position="565"/>
    </location>
</feature>
<feature type="modified residue" description="Phosphoserine" evidence="18 22">
    <location>
        <position position="578"/>
    </location>
</feature>
<feature type="modified residue" description="Phosphothreonine" evidence="15 18">
    <location>
        <position position="582"/>
    </location>
</feature>
<feature type="modified residue" description="Phosphoserine" evidence="14 15 16 18 19 20 22 23">
    <location>
        <position position="588"/>
    </location>
</feature>
<feature type="modified residue" description="Phosphoserine" evidence="15 22">
    <location>
        <position position="593"/>
    </location>
</feature>
<feature type="modified residue" description="Phosphothreonine" evidence="14 15 18 19 20 22 23">
    <location>
        <position position="596"/>
    </location>
</feature>
<feature type="cross-link" description="Glycyl lysine isopeptide (Lys-Gly) (interchain with G-Cter in SUMO2)" evidence="24 25">
    <location>
        <position position="147"/>
    </location>
</feature>
<feature type="splice variant" id="VSP_037678" description="In isoform 3." evidence="9">
    <location>
        <begin position="1"/>
        <end position="118"/>
    </location>
</feature>
<feature type="splice variant" id="VSP_008429" description="In isoform 2." evidence="10">
    <original>SGEKKKDDETVDSLGPLEKGQVKNEAL</original>
    <variation>VRAILKCHSAFSETSIFRTNGKVKSFK</variation>
    <location>
        <begin position="125"/>
        <end position="151"/>
    </location>
</feature>
<feature type="splice variant" id="VSP_008430" description="In isoform 2." evidence="10">
    <location>
        <begin position="152"/>
        <end position="597"/>
    </location>
</feature>
<feature type="sequence variant" id="VAR_024675" description="In dbSNP:rs2231471.">
    <original>P</original>
    <variation>L</variation>
    <location>
        <position position="9"/>
    </location>
</feature>
<feature type="sequence variant" id="VAR_019232" description="In dbSNP:rs17228304." evidence="8">
    <original>E</original>
    <variation>Q</variation>
    <location>
        <position position="78"/>
    </location>
</feature>
<feature type="mutagenesis site" description="Inhibits APC/FZR1 E3 ubiquitin-protein ligase complex activity; when associated with A-374." evidence="4">
    <original>N</original>
    <variation>A</variation>
    <location>
        <position position="339"/>
    </location>
</feature>
<feature type="mutagenesis site" description="Inhibits APC/FZR1 E3 ubiquitin-protein ligase complex activity; when associated with A-339." evidence="4">
    <original>E</original>
    <variation>A</variation>
    <location>
        <position position="374"/>
    </location>
</feature>
<feature type="sequence conflict" description="In Ref. 4; BAD96970." evidence="11" ref="4">
    <original>D</original>
    <variation>E</variation>
    <location>
        <position position="83"/>
    </location>
</feature>
<feature type="sequence conflict" description="In Ref. 4; BAD96970." evidence="11" ref="4">
    <original>F</original>
    <variation>S</variation>
    <location>
        <position position="105"/>
    </location>
</feature>
<feature type="sequence conflict" description="In Ref. 2; BAG65414." evidence="11" ref="2">
    <original>D</original>
    <variation>G</variation>
    <location>
        <position position="527"/>
    </location>
</feature>
<feature type="sequence conflict" description="In Ref. 9; AAF05755." evidence="11" ref="9">
    <original>S</original>
    <variation>F</variation>
    <location>
        <position position="588"/>
    </location>
</feature>
<feature type="helix" evidence="29">
    <location>
        <begin position="25"/>
        <end position="27"/>
    </location>
</feature>
<feature type="helix" evidence="30">
    <location>
        <begin position="29"/>
        <end position="46"/>
    </location>
</feature>
<feature type="helix" evidence="30">
    <location>
        <begin position="49"/>
        <end position="61"/>
    </location>
</feature>
<feature type="turn" evidence="30">
    <location>
        <begin position="67"/>
        <end position="69"/>
    </location>
</feature>
<feature type="helix" evidence="30">
    <location>
        <begin position="78"/>
        <end position="82"/>
    </location>
</feature>
<feature type="helix" evidence="30">
    <location>
        <begin position="84"/>
        <end position="95"/>
    </location>
</feature>
<feature type="helix" evidence="30">
    <location>
        <begin position="99"/>
        <end position="105"/>
    </location>
</feature>
<feature type="turn" evidence="28">
    <location>
        <begin position="106"/>
        <end position="108"/>
    </location>
</feature>
<feature type="helix" evidence="30">
    <location>
        <begin position="112"/>
        <end position="132"/>
    </location>
</feature>
<feature type="strand" evidence="30">
    <location>
        <begin position="136"/>
        <end position="139"/>
    </location>
</feature>
<feature type="helix" evidence="28">
    <location>
        <begin position="140"/>
        <end position="144"/>
    </location>
</feature>
<feature type="helix" evidence="30">
    <location>
        <begin position="149"/>
        <end position="163"/>
    </location>
</feature>
<feature type="helix" evidence="30">
    <location>
        <begin position="169"/>
        <end position="181"/>
    </location>
</feature>
<feature type="helix" evidence="30">
    <location>
        <begin position="185"/>
        <end position="198"/>
    </location>
</feature>
<feature type="helix" evidence="30">
    <location>
        <begin position="203"/>
        <end position="212"/>
    </location>
</feature>
<feature type="helix" evidence="30">
    <location>
        <begin position="216"/>
        <end position="220"/>
    </location>
</feature>
<feature type="helix" evidence="30">
    <location>
        <begin position="229"/>
        <end position="240"/>
    </location>
</feature>
<feature type="helix" evidence="30">
    <location>
        <begin position="244"/>
        <end position="257"/>
    </location>
</feature>
<feature type="turn" evidence="30">
    <location>
        <begin position="258"/>
        <end position="261"/>
    </location>
</feature>
<feature type="helix" evidence="30">
    <location>
        <begin position="263"/>
        <end position="275"/>
    </location>
</feature>
<feature type="helix" evidence="30">
    <location>
        <begin position="279"/>
        <end position="292"/>
    </location>
</feature>
<feature type="helix" evidence="30">
    <location>
        <begin position="300"/>
        <end position="310"/>
    </location>
</feature>
<feature type="helix" evidence="30">
    <location>
        <begin position="313"/>
        <end position="326"/>
    </location>
</feature>
<feature type="strand" evidence="30">
    <location>
        <begin position="328"/>
        <end position="330"/>
    </location>
</feature>
<feature type="helix" evidence="30">
    <location>
        <begin position="331"/>
        <end position="343"/>
    </location>
</feature>
<feature type="helix" evidence="30">
    <location>
        <begin position="347"/>
        <end position="360"/>
    </location>
</feature>
<feature type="strand" evidence="26">
    <location>
        <begin position="361"/>
        <end position="363"/>
    </location>
</feature>
<feature type="helix" evidence="30">
    <location>
        <begin position="365"/>
        <end position="377"/>
    </location>
</feature>
<feature type="helix" evidence="30">
    <location>
        <begin position="381"/>
        <end position="394"/>
    </location>
</feature>
<feature type="helix" evidence="30">
    <location>
        <begin position="399"/>
        <end position="411"/>
    </location>
</feature>
<feature type="helix" evidence="30">
    <location>
        <begin position="417"/>
        <end position="428"/>
    </location>
</feature>
<feature type="helix" evidence="30">
    <location>
        <begin position="433"/>
        <end position="445"/>
    </location>
</feature>
<feature type="helix" evidence="30">
    <location>
        <begin position="449"/>
        <end position="461"/>
    </location>
</feature>
<feature type="strand" evidence="30">
    <location>
        <begin position="465"/>
        <end position="467"/>
    </location>
</feature>
<feature type="helix" evidence="30">
    <location>
        <begin position="469"/>
        <end position="475"/>
    </location>
</feature>
<feature type="turn" evidence="30">
    <location>
        <begin position="476"/>
        <end position="481"/>
    </location>
</feature>
<feature type="helix" evidence="30">
    <location>
        <begin position="484"/>
        <end position="499"/>
    </location>
</feature>
<feature type="helix" evidence="30">
    <location>
        <begin position="509"/>
        <end position="522"/>
    </location>
</feature>
<feature type="helix" evidence="27">
    <location>
        <begin position="527"/>
        <end position="532"/>
    </location>
</feature>
<feature type="turn" evidence="27">
    <location>
        <begin position="533"/>
        <end position="538"/>
    </location>
</feature>
<feature type="turn" evidence="29">
    <location>
        <begin position="540"/>
        <end position="542"/>
    </location>
</feature>
<feature type="helix" evidence="27">
    <location>
        <begin position="543"/>
        <end position="553"/>
    </location>
</feature>
<feature type="helix" evidence="29">
    <location>
        <begin position="575"/>
        <end position="578"/>
    </location>
</feature>
<sequence>MAASTSMVPVAVTAAVAPVLSINSDFSDLREIKKQLLLIAGLTRERGLLHSSKWSAELAFSLPALPLAELQPPPPITEEDAQDMDAYTLAKAYFDVKEYDRAAHFLHGCNSKKAYFLYMYSRYLSGEKKKDDETVDSLGPLEKGQVKNEALRELRVELSKKHQARELDGFGLYLYGVVLRKLDLVKEAIDVFVEATHVLPLHWGAWLELCNLITDKEMLKFLSLPDTWMKEFFLAHIYTELQLIEEALQKYQNLIDVGFSKSSYIVSQIAVAYHNIRDIDKALSIFNELRKQDPYRIENMDTFSNLLYVRSMKSELSYLAHNLCEIDKYRVETCCVIGNYYSLRSQHEKAALYFQRALKLNPRYLGAWTLMGHEYMEMKNTSAAIQAYRHAIEVNKRDYRAWYGLGQTYEILKMPFYCLYYYRRAHQLRPNDSRMLVALGECYEKLNQLVEAKKCYWRAYAVGDVEKMALVKLAKLHEQLTESEQAAQCYIKYIQDIYSCGEIVEHLEESTAFRYLAQYYFKCKLWDEASTCAQKCCAFNDTREEGKALLRQILQLRNQGETPTTEVPAPFFLPASLSANNTPTRRVSPLNLSSVTP</sequence>
<dbReference type="EMBL" id="AB011472">
    <property type="protein sequence ID" value="BAA75628.1"/>
    <property type="status" value="ALT_INIT"/>
    <property type="molecule type" value="mRNA"/>
</dbReference>
<dbReference type="EMBL" id="AK291610">
    <property type="protein sequence ID" value="BAF84299.1"/>
    <property type="status" value="ALT_INIT"/>
    <property type="molecule type" value="mRNA"/>
</dbReference>
<dbReference type="EMBL" id="AK304635">
    <property type="protein sequence ID" value="BAG65414.1"/>
    <property type="molecule type" value="mRNA"/>
</dbReference>
<dbReference type="EMBL" id="AY603103">
    <property type="protein sequence ID" value="AAS99353.1"/>
    <property type="status" value="ALT_INIT"/>
    <property type="molecule type" value="Genomic_DNA"/>
</dbReference>
<dbReference type="EMBL" id="AK223250">
    <property type="protein sequence ID" value="BAD96970.1"/>
    <property type="status" value="ALT_INIT"/>
    <property type="molecule type" value="mRNA"/>
</dbReference>
<dbReference type="EMBL" id="AC106752">
    <property type="status" value="NOT_ANNOTATED_CDS"/>
    <property type="molecule type" value="Genomic_DNA"/>
</dbReference>
<dbReference type="EMBL" id="CH471062">
    <property type="protein sequence ID" value="EAW62155.1"/>
    <property type="molecule type" value="Genomic_DNA"/>
</dbReference>
<dbReference type="EMBL" id="CH471062">
    <property type="protein sequence ID" value="EAW62154.1"/>
    <property type="molecule type" value="Genomic_DNA"/>
</dbReference>
<dbReference type="EMBL" id="CH471062">
    <property type="protein sequence ID" value="EAW62156.1"/>
    <property type="molecule type" value="Genomic_DNA"/>
</dbReference>
<dbReference type="EMBL" id="BC005258">
    <property type="protein sequence ID" value="AAH05258.1"/>
    <property type="status" value="ALT_INIT"/>
    <property type="molecule type" value="mRNA"/>
</dbReference>
<dbReference type="EMBL" id="BC010944">
    <property type="protein sequence ID" value="AAH10944.1"/>
    <property type="status" value="ALT_INIT"/>
    <property type="molecule type" value="mRNA"/>
</dbReference>
<dbReference type="EMBL" id="BC017713">
    <property type="protein sequence ID" value="AAH17713.1"/>
    <property type="status" value="ALT_INIT"/>
    <property type="molecule type" value="mRNA"/>
</dbReference>
<dbReference type="EMBL" id="AF053977">
    <property type="protein sequence ID" value="AAC70920.1"/>
    <property type="status" value="ALT_INIT"/>
    <property type="molecule type" value="mRNA"/>
</dbReference>
<dbReference type="EMBL" id="AF191341">
    <property type="protein sequence ID" value="AAF05755.1"/>
    <property type="molecule type" value="mRNA"/>
</dbReference>
<dbReference type="EMBL" id="BT009810">
    <property type="protein sequence ID" value="AAP88812.1"/>
    <property type="molecule type" value="mRNA"/>
</dbReference>
<dbReference type="CCDS" id="CCDS4200.2">
    <molecule id="Q9UJX2-1"/>
</dbReference>
<dbReference type="PIR" id="T51168">
    <property type="entry name" value="T51168"/>
</dbReference>
<dbReference type="RefSeq" id="NP_004652.2">
    <molecule id="Q9UJX2-1"/>
    <property type="nucleotide sequence ID" value="NM_004661.4"/>
</dbReference>
<dbReference type="PDB" id="4UI9">
    <property type="method" value="EM"/>
    <property type="resolution" value="3.60 A"/>
    <property type="chains" value="C/P=7-597"/>
</dbReference>
<dbReference type="PDB" id="5A31">
    <property type="method" value="EM"/>
    <property type="resolution" value="4.30 A"/>
    <property type="chains" value="C/P=1-597"/>
</dbReference>
<dbReference type="PDB" id="5G04">
    <property type="method" value="EM"/>
    <property type="resolution" value="4.00 A"/>
    <property type="chains" value="C/P=1-597"/>
</dbReference>
<dbReference type="PDB" id="5G05">
    <property type="method" value="EM"/>
    <property type="resolution" value="3.40 A"/>
    <property type="chains" value="C/P=1-597"/>
</dbReference>
<dbReference type="PDB" id="5KHR">
    <property type="method" value="EM"/>
    <property type="resolution" value="6.10 A"/>
    <property type="chains" value="C/P=1-597"/>
</dbReference>
<dbReference type="PDB" id="5KHU">
    <property type="method" value="EM"/>
    <property type="resolution" value="4.80 A"/>
    <property type="chains" value="C/P=1-597"/>
</dbReference>
<dbReference type="PDB" id="5L9T">
    <property type="method" value="EM"/>
    <property type="resolution" value="6.40 A"/>
    <property type="chains" value="C/P=1-597"/>
</dbReference>
<dbReference type="PDB" id="5L9U">
    <property type="method" value="EM"/>
    <property type="resolution" value="6.40 A"/>
    <property type="chains" value="C/P=1-597"/>
</dbReference>
<dbReference type="PDB" id="5LCW">
    <property type="method" value="EM"/>
    <property type="resolution" value="4.00 A"/>
    <property type="chains" value="C/P=1-597"/>
</dbReference>
<dbReference type="PDB" id="6Q6G">
    <property type="method" value="EM"/>
    <property type="resolution" value="3.20 A"/>
    <property type="chains" value="U/V=1-597"/>
</dbReference>
<dbReference type="PDB" id="6Q6H">
    <property type="method" value="EM"/>
    <property type="resolution" value="3.20 A"/>
    <property type="chains" value="U/V=1-597"/>
</dbReference>
<dbReference type="PDB" id="6TLJ">
    <property type="method" value="EM"/>
    <property type="resolution" value="3.80 A"/>
    <property type="chains" value="C/P=1-597"/>
</dbReference>
<dbReference type="PDB" id="6TM5">
    <property type="method" value="EM"/>
    <property type="resolution" value="3.90 A"/>
    <property type="chains" value="C/P=1-597"/>
</dbReference>
<dbReference type="PDB" id="6TNT">
    <property type="method" value="EM"/>
    <property type="resolution" value="3.78 A"/>
    <property type="chains" value="C/P=1-597"/>
</dbReference>
<dbReference type="PDB" id="8PKP">
    <property type="method" value="EM"/>
    <property type="resolution" value="3.20 A"/>
    <property type="chains" value="U/V=1-597"/>
</dbReference>
<dbReference type="PDB" id="8TAR">
    <property type="method" value="EM"/>
    <property type="resolution" value="4.00 A"/>
    <property type="chains" value="U/V=1-597"/>
</dbReference>
<dbReference type="PDB" id="8TAU">
    <property type="method" value="EM"/>
    <property type="resolution" value="3.50 A"/>
    <property type="chains" value="U/V=1-597"/>
</dbReference>
<dbReference type="PDB" id="9GAW">
    <property type="method" value="EM"/>
    <property type="resolution" value="2.90 A"/>
    <property type="chains" value="U/V=1-597"/>
</dbReference>
<dbReference type="PDBsum" id="4UI9"/>
<dbReference type="PDBsum" id="5A31"/>
<dbReference type="PDBsum" id="5G04"/>
<dbReference type="PDBsum" id="5G05"/>
<dbReference type="PDBsum" id="5KHR"/>
<dbReference type="PDBsum" id="5KHU"/>
<dbReference type="PDBsum" id="5L9T"/>
<dbReference type="PDBsum" id="5L9U"/>
<dbReference type="PDBsum" id="5LCW"/>
<dbReference type="PDBsum" id="6Q6G"/>
<dbReference type="PDBsum" id="6Q6H"/>
<dbReference type="PDBsum" id="6TLJ"/>
<dbReference type="PDBsum" id="6TM5"/>
<dbReference type="PDBsum" id="6TNT"/>
<dbReference type="PDBsum" id="8PKP"/>
<dbReference type="PDBsum" id="8TAR"/>
<dbReference type="PDBsum" id="8TAU"/>
<dbReference type="PDBsum" id="9GAW"/>
<dbReference type="EMDB" id="EMD-10516"/>
<dbReference type="EMDB" id="EMD-10518"/>
<dbReference type="EMDB" id="EMD-10536"/>
<dbReference type="EMDB" id="EMD-13931"/>
<dbReference type="EMDB" id="EMD-17751"/>
<dbReference type="EMDB" id="EMD-19711"/>
<dbReference type="EMDB" id="EMD-2924"/>
<dbReference type="EMDB" id="EMD-2925"/>
<dbReference type="EMDB" id="EMD-3385"/>
<dbReference type="EMDB" id="EMD-3386"/>
<dbReference type="EMDB" id="EMD-3387"/>
<dbReference type="EMDB" id="EMD-3388"/>
<dbReference type="EMDB" id="EMD-3389"/>
<dbReference type="EMDB" id="EMD-3390"/>
<dbReference type="EMDB" id="EMD-4037"/>
<dbReference type="EMDB" id="EMD-41140"/>
<dbReference type="EMDB" id="EMD-41142"/>
<dbReference type="EMDB" id="EMD-4465"/>
<dbReference type="EMDB" id="EMD-4466"/>
<dbReference type="EMDB" id="EMD-4467"/>
<dbReference type="EMDB" id="EMD-51190"/>
<dbReference type="SMR" id="Q9UJX2"/>
<dbReference type="BioGRID" id="114242">
    <property type="interactions" value="279"/>
</dbReference>
<dbReference type="ComplexPortal" id="CPX-1860">
    <property type="entry name" value="Anaphase-promoting core complex"/>
</dbReference>
<dbReference type="CORUM" id="Q9UJX2"/>
<dbReference type="DIP" id="DIP-32959N"/>
<dbReference type="ELM" id="Q9UJX2"/>
<dbReference type="FunCoup" id="Q9UJX2">
    <property type="interactions" value="3894"/>
</dbReference>
<dbReference type="IntAct" id="Q9UJX2">
    <property type="interactions" value="197"/>
</dbReference>
<dbReference type="MINT" id="Q9UJX2"/>
<dbReference type="STRING" id="9606.ENSP00000378350"/>
<dbReference type="GlyGen" id="Q9UJX2">
    <property type="glycosylation" value="4 sites, 1 O-linked glycan (3 sites)"/>
</dbReference>
<dbReference type="iPTMnet" id="Q9UJX2"/>
<dbReference type="PhosphoSitePlus" id="Q9UJX2"/>
<dbReference type="SwissPalm" id="Q9UJX2"/>
<dbReference type="BioMuta" id="CDC23"/>
<dbReference type="DMDM" id="254763423"/>
<dbReference type="jPOST" id="Q9UJX2"/>
<dbReference type="MassIVE" id="Q9UJX2"/>
<dbReference type="PaxDb" id="9606-ENSP00000378350"/>
<dbReference type="PeptideAtlas" id="Q9UJX2"/>
<dbReference type="ProteomicsDB" id="84679">
    <molecule id="Q9UJX2-1"/>
</dbReference>
<dbReference type="ProteomicsDB" id="84680">
    <molecule id="Q9UJX2-2"/>
</dbReference>
<dbReference type="ProteomicsDB" id="84681">
    <molecule id="Q9UJX2-3"/>
</dbReference>
<dbReference type="Pumba" id="Q9UJX2"/>
<dbReference type="Antibodypedia" id="14882">
    <property type="antibodies" value="305 antibodies from 40 providers"/>
</dbReference>
<dbReference type="DNASU" id="8697"/>
<dbReference type="Ensembl" id="ENST00000394884.7">
    <molecule id="Q9UJX2-2"/>
    <property type="protein sequence ID" value="ENSP00000378348.3"/>
    <property type="gene ID" value="ENSG00000094880.11"/>
</dbReference>
<dbReference type="Ensembl" id="ENST00000394886.7">
    <molecule id="Q9UJX2-1"/>
    <property type="protein sequence ID" value="ENSP00000378350.2"/>
    <property type="gene ID" value="ENSG00000094880.11"/>
</dbReference>
<dbReference type="GeneID" id="8697"/>
<dbReference type="KEGG" id="hsa:8697"/>
<dbReference type="MANE-Select" id="ENST00000394886.7">
    <property type="protein sequence ID" value="ENSP00000378350.2"/>
    <property type="RefSeq nucleotide sequence ID" value="NM_004661.4"/>
    <property type="RefSeq protein sequence ID" value="NP_004652.2"/>
</dbReference>
<dbReference type="UCSC" id="uc003lcl.3">
    <molecule id="Q9UJX2-1"/>
    <property type="organism name" value="human"/>
</dbReference>
<dbReference type="AGR" id="HGNC:1724"/>
<dbReference type="CTD" id="8697"/>
<dbReference type="DisGeNET" id="8697"/>
<dbReference type="GeneCards" id="CDC23"/>
<dbReference type="HGNC" id="HGNC:1724">
    <property type="gene designation" value="CDC23"/>
</dbReference>
<dbReference type="HPA" id="ENSG00000094880">
    <property type="expression patterns" value="Low tissue specificity"/>
</dbReference>
<dbReference type="MIM" id="603462">
    <property type="type" value="gene"/>
</dbReference>
<dbReference type="neXtProt" id="NX_Q9UJX2"/>
<dbReference type="OpenTargets" id="ENSG00000094880"/>
<dbReference type="PharmGKB" id="PA26258"/>
<dbReference type="VEuPathDB" id="HostDB:ENSG00000094880"/>
<dbReference type="eggNOG" id="KOG1155">
    <property type="taxonomic scope" value="Eukaryota"/>
</dbReference>
<dbReference type="GeneTree" id="ENSGT00950000182950"/>
<dbReference type="HOGENOM" id="CLU_018320_3_0_1"/>
<dbReference type="InParanoid" id="Q9UJX2"/>
<dbReference type="OMA" id="ERCLYHS"/>
<dbReference type="OrthoDB" id="10262026at2759"/>
<dbReference type="PAN-GO" id="Q9UJX2">
    <property type="GO annotations" value="7 GO annotations based on evolutionary models"/>
</dbReference>
<dbReference type="PhylomeDB" id="Q9UJX2"/>
<dbReference type="TreeFam" id="TF101055"/>
<dbReference type="PathwayCommons" id="Q9UJX2"/>
<dbReference type="Reactome" id="R-HSA-141430">
    <property type="pathway name" value="Inactivation of APC/C via direct inhibition of the APC/C complex"/>
</dbReference>
<dbReference type="Reactome" id="R-HSA-174048">
    <property type="pathway name" value="APC/C:Cdc20 mediated degradation of Cyclin B"/>
</dbReference>
<dbReference type="Reactome" id="R-HSA-174084">
    <property type="pathway name" value="Autodegradation of Cdh1 by Cdh1:APC/C"/>
</dbReference>
<dbReference type="Reactome" id="R-HSA-174154">
    <property type="pathway name" value="APC/C:Cdc20 mediated degradation of Securin"/>
</dbReference>
<dbReference type="Reactome" id="R-HSA-174178">
    <property type="pathway name" value="APC/C:Cdh1 mediated degradation of Cdc20 and other APC/C:Cdh1 targeted proteins in late mitosis/early G1"/>
</dbReference>
<dbReference type="Reactome" id="R-HSA-174184">
    <property type="pathway name" value="Cdc20:Phospho-APC/C mediated degradation of Cyclin A"/>
</dbReference>
<dbReference type="Reactome" id="R-HSA-176407">
    <property type="pathway name" value="Conversion from APC/C:Cdc20 to APC/C:Cdh1 in late anaphase"/>
</dbReference>
<dbReference type="Reactome" id="R-HSA-176408">
    <property type="pathway name" value="Regulation of APC/C activators between G1/S and early anaphase"/>
</dbReference>
<dbReference type="Reactome" id="R-HSA-176409">
    <property type="pathway name" value="APC/C:Cdc20 mediated degradation of mitotic proteins"/>
</dbReference>
<dbReference type="Reactome" id="R-HSA-176412">
    <property type="pathway name" value="Phosphorylation of the APC/C"/>
</dbReference>
<dbReference type="Reactome" id="R-HSA-179409">
    <property type="pathway name" value="APC-Cdc20 mediated degradation of Nek2A"/>
</dbReference>
<dbReference type="Reactome" id="R-HSA-2467813">
    <property type="pathway name" value="Separation of Sister Chromatids"/>
</dbReference>
<dbReference type="Reactome" id="R-HSA-2559582">
    <property type="pathway name" value="Senescence-Associated Secretory Phenotype (SASP)"/>
</dbReference>
<dbReference type="Reactome" id="R-HSA-68867">
    <property type="pathway name" value="Assembly of the pre-replicative complex"/>
</dbReference>
<dbReference type="Reactome" id="R-HSA-69017">
    <property type="pathway name" value="CDK-mediated phosphorylation and removal of Cdc6"/>
</dbReference>
<dbReference type="Reactome" id="R-HSA-8853884">
    <property type="pathway name" value="Transcriptional Regulation by VENTX"/>
</dbReference>
<dbReference type="Reactome" id="R-HSA-9687136">
    <property type="pathway name" value="Aberrant regulation of mitotic exit in cancer due to RB1 defects"/>
</dbReference>
<dbReference type="Reactome" id="R-HSA-983168">
    <property type="pathway name" value="Antigen processing: Ubiquitination &amp; Proteasome degradation"/>
</dbReference>
<dbReference type="SignaLink" id="Q9UJX2"/>
<dbReference type="SIGNOR" id="Q9UJX2"/>
<dbReference type="UniPathway" id="UPA00143"/>
<dbReference type="BioGRID-ORCS" id="8697">
    <property type="hits" value="817 hits in 1180 CRISPR screens"/>
</dbReference>
<dbReference type="ChiTaRS" id="CDC23">
    <property type="organism name" value="human"/>
</dbReference>
<dbReference type="EvolutionaryTrace" id="Q9UJX2"/>
<dbReference type="GeneWiki" id="CDC23"/>
<dbReference type="GenomeRNAi" id="8697"/>
<dbReference type="Pharos" id="Q9UJX2">
    <property type="development level" value="Tbio"/>
</dbReference>
<dbReference type="PRO" id="PR:Q9UJX2"/>
<dbReference type="Proteomes" id="UP000005640">
    <property type="component" value="Chromosome 5"/>
</dbReference>
<dbReference type="RNAct" id="Q9UJX2">
    <property type="molecule type" value="protein"/>
</dbReference>
<dbReference type="Bgee" id="ENSG00000094880">
    <property type="expression patterns" value="Expressed in adrenal tissue and 202 other cell types or tissues"/>
</dbReference>
<dbReference type="ExpressionAtlas" id="Q9UJX2">
    <property type="expression patterns" value="baseline and differential"/>
</dbReference>
<dbReference type="GO" id="GO:0005680">
    <property type="term" value="C:anaphase-promoting complex"/>
    <property type="evidence" value="ECO:0000314"/>
    <property type="project" value="UniProtKB"/>
</dbReference>
<dbReference type="GO" id="GO:0005829">
    <property type="term" value="C:cytosol"/>
    <property type="evidence" value="ECO:0000304"/>
    <property type="project" value="Reactome"/>
</dbReference>
<dbReference type="GO" id="GO:0005654">
    <property type="term" value="C:nucleoplasm"/>
    <property type="evidence" value="ECO:0000304"/>
    <property type="project" value="Reactome"/>
</dbReference>
<dbReference type="GO" id="GO:0004842">
    <property type="term" value="F:ubiquitin-protein transferase activity"/>
    <property type="evidence" value="ECO:0000304"/>
    <property type="project" value="UniProtKB"/>
</dbReference>
<dbReference type="GO" id="GO:0031145">
    <property type="term" value="P:anaphase-promoting complex-dependent catabolic process"/>
    <property type="evidence" value="ECO:0000314"/>
    <property type="project" value="UniProtKB"/>
</dbReference>
<dbReference type="GO" id="GO:0051301">
    <property type="term" value="P:cell division"/>
    <property type="evidence" value="ECO:0000318"/>
    <property type="project" value="GO_Central"/>
</dbReference>
<dbReference type="GO" id="GO:0007091">
    <property type="term" value="P:metaphase/anaphase transition of mitotic cell cycle"/>
    <property type="evidence" value="ECO:0000304"/>
    <property type="project" value="ProtInc"/>
</dbReference>
<dbReference type="GO" id="GO:0000278">
    <property type="term" value="P:mitotic cell cycle"/>
    <property type="evidence" value="ECO:0000314"/>
    <property type="project" value="UniProtKB"/>
</dbReference>
<dbReference type="GO" id="GO:0007080">
    <property type="term" value="P:mitotic metaphase chromosome alignment"/>
    <property type="evidence" value="ECO:0000314"/>
    <property type="project" value="UniProtKB"/>
</dbReference>
<dbReference type="GO" id="GO:0045842">
    <property type="term" value="P:positive regulation of mitotic metaphase/anaphase transition"/>
    <property type="evidence" value="ECO:0000318"/>
    <property type="project" value="GO_Central"/>
</dbReference>
<dbReference type="GO" id="GO:0141198">
    <property type="term" value="P:protein branched polyubiquitination"/>
    <property type="evidence" value="ECO:0000314"/>
    <property type="project" value="UniProtKB"/>
</dbReference>
<dbReference type="GO" id="GO:0070979">
    <property type="term" value="P:protein K11-linked ubiquitination"/>
    <property type="evidence" value="ECO:0000314"/>
    <property type="project" value="UniProtKB"/>
</dbReference>
<dbReference type="GO" id="GO:0070936">
    <property type="term" value="P:protein K48-linked ubiquitination"/>
    <property type="evidence" value="ECO:0000314"/>
    <property type="project" value="UniProtKB"/>
</dbReference>
<dbReference type="GO" id="GO:0016567">
    <property type="term" value="P:protein ubiquitination"/>
    <property type="evidence" value="ECO:0000318"/>
    <property type="project" value="GO_Central"/>
</dbReference>
<dbReference type="GO" id="GO:0007096">
    <property type="term" value="P:regulation of exit from mitosis"/>
    <property type="evidence" value="ECO:0000304"/>
    <property type="project" value="ProtInc"/>
</dbReference>
<dbReference type="GO" id="GO:0051445">
    <property type="term" value="P:regulation of meiotic cell cycle"/>
    <property type="evidence" value="ECO:0000303"/>
    <property type="project" value="ComplexPortal"/>
</dbReference>
<dbReference type="GO" id="GO:0007346">
    <property type="term" value="P:regulation of mitotic cell cycle"/>
    <property type="evidence" value="ECO:0000303"/>
    <property type="project" value="ComplexPortal"/>
</dbReference>
<dbReference type="GO" id="GO:0030071">
    <property type="term" value="P:regulation of mitotic metaphase/anaphase transition"/>
    <property type="evidence" value="ECO:0000314"/>
    <property type="project" value="UniProtKB"/>
</dbReference>
<dbReference type="GO" id="GO:0006511">
    <property type="term" value="P:ubiquitin-dependent protein catabolic process"/>
    <property type="evidence" value="ECO:0000304"/>
    <property type="project" value="ProtInc"/>
</dbReference>
<dbReference type="DisProt" id="DP01240"/>
<dbReference type="FunFam" id="1.25.40.10:FF:000093">
    <property type="entry name" value="cell division cycle protein 23 homolog"/>
    <property type="match status" value="1"/>
</dbReference>
<dbReference type="FunFam" id="1.25.40.10:FF:000187">
    <property type="entry name" value="cell division cycle protein 23 homolog"/>
    <property type="match status" value="1"/>
</dbReference>
<dbReference type="Gene3D" id="1.25.40.10">
    <property type="entry name" value="Tetratricopeptide repeat domain"/>
    <property type="match status" value="2"/>
</dbReference>
<dbReference type="InterPro" id="IPR007192">
    <property type="entry name" value="APC8"/>
</dbReference>
<dbReference type="InterPro" id="IPR011990">
    <property type="entry name" value="TPR-like_helical_dom_sf"/>
</dbReference>
<dbReference type="InterPro" id="IPR019734">
    <property type="entry name" value="TPR_rpt"/>
</dbReference>
<dbReference type="PANTHER" id="PTHR12558">
    <property type="entry name" value="CELL DIVISION CYCLE 16,23,27"/>
    <property type="match status" value="1"/>
</dbReference>
<dbReference type="PANTHER" id="PTHR12558:SF10">
    <property type="entry name" value="CELL DIVISION CYCLE PROTEIN 23 HOMOLOG"/>
    <property type="match status" value="1"/>
</dbReference>
<dbReference type="Pfam" id="PF04049">
    <property type="entry name" value="ANAPC8"/>
    <property type="match status" value="1"/>
</dbReference>
<dbReference type="Pfam" id="PF13414">
    <property type="entry name" value="TPR_11"/>
    <property type="match status" value="1"/>
</dbReference>
<dbReference type="Pfam" id="PF13181">
    <property type="entry name" value="TPR_8"/>
    <property type="match status" value="1"/>
</dbReference>
<dbReference type="SMART" id="SM00028">
    <property type="entry name" value="TPR"/>
    <property type="match status" value="7"/>
</dbReference>
<dbReference type="SUPFAM" id="SSF48452">
    <property type="entry name" value="TPR-like"/>
    <property type="match status" value="2"/>
</dbReference>
<dbReference type="PROSITE" id="PS50005">
    <property type="entry name" value="TPR"/>
    <property type="match status" value="6"/>
</dbReference>
<dbReference type="PROSITE" id="PS50293">
    <property type="entry name" value="TPR_REGION"/>
    <property type="match status" value="1"/>
</dbReference>
<reference key="1">
    <citation type="submission" date="1998-02" db="EMBL/GenBank/DDBJ databases">
        <title>Human CDC23 gene.</title>
        <authorList>
            <person name="Oyamatsu T."/>
            <person name="Kotani S."/>
            <person name="Todokoro K."/>
        </authorList>
    </citation>
    <scope>NUCLEOTIDE SEQUENCE [MRNA] (ISOFORM 1)</scope>
</reference>
<reference key="2">
    <citation type="journal article" date="2004" name="Nat. Genet.">
        <title>Complete sequencing and characterization of 21,243 full-length human cDNAs.</title>
        <authorList>
            <person name="Ota T."/>
            <person name="Suzuki Y."/>
            <person name="Nishikawa T."/>
            <person name="Otsuki T."/>
            <person name="Sugiyama T."/>
            <person name="Irie R."/>
            <person name="Wakamatsu A."/>
            <person name="Hayashi K."/>
            <person name="Sato H."/>
            <person name="Nagai K."/>
            <person name="Kimura K."/>
            <person name="Makita H."/>
            <person name="Sekine M."/>
            <person name="Obayashi M."/>
            <person name="Nishi T."/>
            <person name="Shibahara T."/>
            <person name="Tanaka T."/>
            <person name="Ishii S."/>
            <person name="Yamamoto J."/>
            <person name="Saito K."/>
            <person name="Kawai Y."/>
            <person name="Isono Y."/>
            <person name="Nakamura Y."/>
            <person name="Nagahari K."/>
            <person name="Murakami K."/>
            <person name="Yasuda T."/>
            <person name="Iwayanagi T."/>
            <person name="Wagatsuma M."/>
            <person name="Shiratori A."/>
            <person name="Sudo H."/>
            <person name="Hosoiri T."/>
            <person name="Kaku Y."/>
            <person name="Kodaira H."/>
            <person name="Kondo H."/>
            <person name="Sugawara M."/>
            <person name="Takahashi M."/>
            <person name="Kanda K."/>
            <person name="Yokoi T."/>
            <person name="Furuya T."/>
            <person name="Kikkawa E."/>
            <person name="Omura Y."/>
            <person name="Abe K."/>
            <person name="Kamihara K."/>
            <person name="Katsuta N."/>
            <person name="Sato K."/>
            <person name="Tanikawa M."/>
            <person name="Yamazaki M."/>
            <person name="Ninomiya K."/>
            <person name="Ishibashi T."/>
            <person name="Yamashita H."/>
            <person name="Murakawa K."/>
            <person name="Fujimori K."/>
            <person name="Tanai H."/>
            <person name="Kimata M."/>
            <person name="Watanabe M."/>
            <person name="Hiraoka S."/>
            <person name="Chiba Y."/>
            <person name="Ishida S."/>
            <person name="Ono Y."/>
            <person name="Takiguchi S."/>
            <person name="Watanabe S."/>
            <person name="Yosida M."/>
            <person name="Hotuta T."/>
            <person name="Kusano J."/>
            <person name="Kanehori K."/>
            <person name="Takahashi-Fujii A."/>
            <person name="Hara H."/>
            <person name="Tanase T.-O."/>
            <person name="Nomura Y."/>
            <person name="Togiya S."/>
            <person name="Komai F."/>
            <person name="Hara R."/>
            <person name="Takeuchi K."/>
            <person name="Arita M."/>
            <person name="Imose N."/>
            <person name="Musashino K."/>
            <person name="Yuuki H."/>
            <person name="Oshima A."/>
            <person name="Sasaki N."/>
            <person name="Aotsuka S."/>
            <person name="Yoshikawa Y."/>
            <person name="Matsunawa H."/>
            <person name="Ichihara T."/>
            <person name="Shiohata N."/>
            <person name="Sano S."/>
            <person name="Moriya S."/>
            <person name="Momiyama H."/>
            <person name="Satoh N."/>
            <person name="Takami S."/>
            <person name="Terashima Y."/>
            <person name="Suzuki O."/>
            <person name="Nakagawa S."/>
            <person name="Senoh A."/>
            <person name="Mizoguchi H."/>
            <person name="Goto Y."/>
            <person name="Shimizu F."/>
            <person name="Wakebe H."/>
            <person name="Hishigaki H."/>
            <person name="Watanabe T."/>
            <person name="Sugiyama A."/>
            <person name="Takemoto M."/>
            <person name="Kawakami B."/>
            <person name="Yamazaki M."/>
            <person name="Watanabe K."/>
            <person name="Kumagai A."/>
            <person name="Itakura S."/>
            <person name="Fukuzumi Y."/>
            <person name="Fujimori Y."/>
            <person name="Komiyama M."/>
            <person name="Tashiro H."/>
            <person name="Tanigami A."/>
            <person name="Fujiwara T."/>
            <person name="Ono T."/>
            <person name="Yamada K."/>
            <person name="Fujii Y."/>
            <person name="Ozaki K."/>
            <person name="Hirao M."/>
            <person name="Ohmori Y."/>
            <person name="Kawabata A."/>
            <person name="Hikiji T."/>
            <person name="Kobatake N."/>
            <person name="Inagaki H."/>
            <person name="Ikema Y."/>
            <person name="Okamoto S."/>
            <person name="Okitani R."/>
            <person name="Kawakami T."/>
            <person name="Noguchi S."/>
            <person name="Itoh T."/>
            <person name="Shigeta K."/>
            <person name="Senba T."/>
            <person name="Matsumura K."/>
            <person name="Nakajima Y."/>
            <person name="Mizuno T."/>
            <person name="Morinaga M."/>
            <person name="Sasaki M."/>
            <person name="Togashi T."/>
            <person name="Oyama M."/>
            <person name="Hata H."/>
            <person name="Watanabe M."/>
            <person name="Komatsu T."/>
            <person name="Mizushima-Sugano J."/>
            <person name="Satoh T."/>
            <person name="Shirai Y."/>
            <person name="Takahashi Y."/>
            <person name="Nakagawa K."/>
            <person name="Okumura K."/>
            <person name="Nagase T."/>
            <person name="Nomura N."/>
            <person name="Kikuchi H."/>
            <person name="Masuho Y."/>
            <person name="Yamashita R."/>
            <person name="Nakai K."/>
            <person name="Yada T."/>
            <person name="Nakamura Y."/>
            <person name="Ohara O."/>
            <person name="Isogai T."/>
            <person name="Sugano S."/>
        </authorList>
    </citation>
    <scope>NUCLEOTIDE SEQUENCE [LARGE SCALE MRNA] (ISOFORMS 1 AND 3)</scope>
    <source>
        <tissue>Placenta</tissue>
        <tissue>Uterus</tissue>
    </source>
</reference>
<reference key="3">
    <citation type="submission" date="2004-04" db="EMBL/GenBank/DDBJ databases">
        <authorList>
            <consortium name="NIEHS SNPs program"/>
        </authorList>
    </citation>
    <scope>NUCLEOTIDE SEQUENCE [GENOMIC DNA]</scope>
    <scope>VARIANT GLN-78</scope>
</reference>
<reference key="4">
    <citation type="submission" date="2005-04" db="EMBL/GenBank/DDBJ databases">
        <authorList>
            <person name="Suzuki Y."/>
            <person name="Sugano S."/>
            <person name="Totoki Y."/>
            <person name="Toyoda A."/>
            <person name="Takeda T."/>
            <person name="Sakaki Y."/>
            <person name="Tanaka A."/>
            <person name="Yokoyama S."/>
        </authorList>
    </citation>
    <scope>NUCLEOTIDE SEQUENCE [LARGE SCALE MRNA] (ISOFORM 1)</scope>
    <source>
        <tissue>Gastric mucosa</tissue>
    </source>
</reference>
<reference key="5">
    <citation type="journal article" date="2004" name="Nature">
        <title>The DNA sequence and comparative analysis of human chromosome 5.</title>
        <authorList>
            <person name="Schmutz J."/>
            <person name="Martin J."/>
            <person name="Terry A."/>
            <person name="Couronne O."/>
            <person name="Grimwood J."/>
            <person name="Lowry S."/>
            <person name="Gordon L.A."/>
            <person name="Scott D."/>
            <person name="Xie G."/>
            <person name="Huang W."/>
            <person name="Hellsten U."/>
            <person name="Tran-Gyamfi M."/>
            <person name="She X."/>
            <person name="Prabhakar S."/>
            <person name="Aerts A."/>
            <person name="Altherr M."/>
            <person name="Bajorek E."/>
            <person name="Black S."/>
            <person name="Branscomb E."/>
            <person name="Caoile C."/>
            <person name="Challacombe J.F."/>
            <person name="Chan Y.M."/>
            <person name="Denys M."/>
            <person name="Detter J.C."/>
            <person name="Escobar J."/>
            <person name="Flowers D."/>
            <person name="Fotopulos D."/>
            <person name="Glavina T."/>
            <person name="Gomez M."/>
            <person name="Gonzales E."/>
            <person name="Goodstein D."/>
            <person name="Grigoriev I."/>
            <person name="Groza M."/>
            <person name="Hammon N."/>
            <person name="Hawkins T."/>
            <person name="Haydu L."/>
            <person name="Israni S."/>
            <person name="Jett J."/>
            <person name="Kadner K."/>
            <person name="Kimball H."/>
            <person name="Kobayashi A."/>
            <person name="Lopez F."/>
            <person name="Lou Y."/>
            <person name="Martinez D."/>
            <person name="Medina C."/>
            <person name="Morgan J."/>
            <person name="Nandkeshwar R."/>
            <person name="Noonan J.P."/>
            <person name="Pitluck S."/>
            <person name="Pollard M."/>
            <person name="Predki P."/>
            <person name="Priest J."/>
            <person name="Ramirez L."/>
            <person name="Retterer J."/>
            <person name="Rodriguez A."/>
            <person name="Rogers S."/>
            <person name="Salamov A."/>
            <person name="Salazar A."/>
            <person name="Thayer N."/>
            <person name="Tice H."/>
            <person name="Tsai M."/>
            <person name="Ustaszewska A."/>
            <person name="Vo N."/>
            <person name="Wheeler J."/>
            <person name="Wu K."/>
            <person name="Yang J."/>
            <person name="Dickson M."/>
            <person name="Cheng J.-F."/>
            <person name="Eichler E.E."/>
            <person name="Olsen A."/>
            <person name="Pennacchio L.A."/>
            <person name="Rokhsar D.S."/>
            <person name="Richardson P."/>
            <person name="Lucas S.M."/>
            <person name="Myers R.M."/>
            <person name="Rubin E.M."/>
        </authorList>
    </citation>
    <scope>NUCLEOTIDE SEQUENCE [LARGE SCALE GENOMIC DNA]</scope>
</reference>
<reference key="6">
    <citation type="submission" date="2005-09" db="EMBL/GenBank/DDBJ databases">
        <authorList>
            <person name="Mural R.J."/>
            <person name="Istrail S."/>
            <person name="Sutton G.G."/>
            <person name="Florea L."/>
            <person name="Halpern A.L."/>
            <person name="Mobarry C.M."/>
            <person name="Lippert R."/>
            <person name="Walenz B."/>
            <person name="Shatkay H."/>
            <person name="Dew I."/>
            <person name="Miller J.R."/>
            <person name="Flanigan M.J."/>
            <person name="Edwards N.J."/>
            <person name="Bolanos R."/>
            <person name="Fasulo D."/>
            <person name="Halldorsson B.V."/>
            <person name="Hannenhalli S."/>
            <person name="Turner R."/>
            <person name="Yooseph S."/>
            <person name="Lu F."/>
            <person name="Nusskern D.R."/>
            <person name="Shue B.C."/>
            <person name="Zheng X.H."/>
            <person name="Zhong F."/>
            <person name="Delcher A.L."/>
            <person name="Huson D.H."/>
            <person name="Kravitz S.A."/>
            <person name="Mouchard L."/>
            <person name="Reinert K."/>
            <person name="Remington K.A."/>
            <person name="Clark A.G."/>
            <person name="Waterman M.S."/>
            <person name="Eichler E.E."/>
            <person name="Adams M.D."/>
            <person name="Hunkapiller M.W."/>
            <person name="Myers E.W."/>
            <person name="Venter J.C."/>
        </authorList>
    </citation>
    <scope>NUCLEOTIDE SEQUENCE [LARGE SCALE GENOMIC DNA]</scope>
</reference>
<reference key="7">
    <citation type="journal article" date="2004" name="Genome Res.">
        <title>The status, quality, and expansion of the NIH full-length cDNA project: the Mammalian Gene Collection (MGC).</title>
        <authorList>
            <consortium name="The MGC Project Team"/>
        </authorList>
    </citation>
    <scope>NUCLEOTIDE SEQUENCE [LARGE SCALE MRNA] (ISOFORM 2)</scope>
    <scope>NUCLEOTIDE SEQUENCE [LARGE SCALE MRNA] OF 5-597 (ISOFORM 1)</scope>
    <source>
        <tissue>Brain</tissue>
        <tissue>Duodenum</tissue>
        <tissue>Pancreas</tissue>
    </source>
</reference>
<reference key="8">
    <citation type="journal article" date="1998" name="Genomics">
        <title>Human CDC23: cDNA cloning, mapping to 5q31, genomic structure, and evaluation as a candidate tumor suppressor gene in myeloid leukemias.</title>
        <authorList>
            <person name="Zhao N."/>
            <person name="Lai F."/>
            <person name="Fernald A.A."/>
            <person name="Eisenbart J.D."/>
            <person name="Espinosa R."/>
            <person name="Wang P.W."/>
            <person name="Le Beau M.M."/>
        </authorList>
    </citation>
    <scope>NUCLEOTIDE SEQUENCE [MRNA] OF 2-597 (ISOFORM 1)</scope>
    <source>
        <tissue>Bone marrow</tissue>
    </source>
</reference>
<reference key="9">
    <citation type="journal article" date="1998" name="Science">
        <title>Identification of a cullin homology region in a subunit of the anaphase-promoting complex.</title>
        <authorList>
            <person name="Yu H."/>
            <person name="Peters J.-M."/>
            <person name="King R.W."/>
            <person name="Page A.M."/>
            <person name="Hieter P."/>
            <person name="Kirschner M.W."/>
        </authorList>
    </citation>
    <scope>NUCLEOTIDE SEQUENCE [MRNA] OF 7-597 (ISOFORM 1)</scope>
    <scope>SUBUNIT</scope>
</reference>
<reference key="10">
    <citation type="submission" date="2003-08" db="EMBL/GenBank/DDBJ databases">
        <title>Cloning of human full-length CDSs in BD Creator(TM) system donor vector.</title>
        <authorList>
            <person name="Kalnine N."/>
            <person name="Chen X."/>
            <person name="Rolfs A."/>
            <person name="Halleck A."/>
            <person name="Hines L."/>
            <person name="Eisenstein S."/>
            <person name="Koundinya M."/>
            <person name="Raphael J."/>
            <person name="Moreira D."/>
            <person name="Kelley T."/>
            <person name="LaBaer J."/>
            <person name="Lin Y."/>
            <person name="Phelan M."/>
            <person name="Farmer A."/>
        </authorList>
    </citation>
    <scope>NUCLEOTIDE SEQUENCE [LARGE SCALE MRNA] OF 7-597 (ISOFORM 1)</scope>
</reference>
<reference key="11">
    <citation type="journal article" date="2003" name="EMBO J.">
        <title>Mitotic regulation of the human anaphase-promoting complex by phosphorylation.</title>
        <authorList>
            <person name="Kraft C."/>
            <person name="Herzog F."/>
            <person name="Gieffers C."/>
            <person name="Mechtler K."/>
            <person name="Hagting A."/>
            <person name="Pines J."/>
            <person name="Peters J.-M."/>
        </authorList>
    </citation>
    <scope>PHOSPHORYLATION AT TYR-273; THR-562 AND THR-565</scope>
</reference>
<reference key="12">
    <citation type="journal article" date="2006" name="Nat. Biotechnol.">
        <title>A probability-based approach for high-throughput protein phosphorylation analysis and site localization.</title>
        <authorList>
            <person name="Beausoleil S.A."/>
            <person name="Villen J."/>
            <person name="Gerber S.A."/>
            <person name="Rush J."/>
            <person name="Gygi S.P."/>
        </authorList>
    </citation>
    <scope>PHOSPHORYLATION [LARGE SCALE ANALYSIS] AT SER-588 AND THR-596</scope>
    <scope>IDENTIFICATION BY MASS SPECTROMETRY [LARGE SCALE ANALYSIS]</scope>
    <source>
        <tissue>Cervix carcinoma</tissue>
    </source>
</reference>
<reference key="13">
    <citation type="journal article" date="2008" name="Cell">
        <title>Mechanism of ubiquitin-chain formation by the human anaphase-promoting complex.</title>
        <authorList>
            <person name="Jin L."/>
            <person name="Williamson A."/>
            <person name="Banerjee S."/>
            <person name="Philipp I."/>
            <person name="Rape M."/>
        </authorList>
    </citation>
    <scope>FUNCTION OF THE APC/C</scope>
</reference>
<reference key="14">
    <citation type="journal article" date="2008" name="Mol. Cell">
        <title>Kinase-selective enrichment enables quantitative phosphoproteomics of the kinome across the cell cycle.</title>
        <authorList>
            <person name="Daub H."/>
            <person name="Olsen J.V."/>
            <person name="Bairlein M."/>
            <person name="Gnad F."/>
            <person name="Oppermann F.S."/>
            <person name="Korner R."/>
            <person name="Greff Z."/>
            <person name="Keri G."/>
            <person name="Stemmann O."/>
            <person name="Mann M."/>
        </authorList>
    </citation>
    <scope>PHOSPHORYLATION [LARGE SCALE ANALYSIS] AT SER-588</scope>
    <scope>IDENTIFICATION BY MASS SPECTROMETRY [LARGE SCALE ANALYSIS]</scope>
    <source>
        <tissue>Cervix carcinoma</tissue>
    </source>
</reference>
<reference key="15">
    <citation type="journal article" date="2008" name="Proc. Natl. Acad. Sci. U.S.A.">
        <title>A quantitative atlas of mitotic phosphorylation.</title>
        <authorList>
            <person name="Dephoure N."/>
            <person name="Zhou C."/>
            <person name="Villen J."/>
            <person name="Beausoleil S.A."/>
            <person name="Bakalarski C.E."/>
            <person name="Elledge S.J."/>
            <person name="Gygi S.P."/>
        </authorList>
    </citation>
    <scope>PHOSPHORYLATION [LARGE SCALE ANALYSIS] AT THR-562; THR-582; SER-588; SER-593 AND THR-596</scope>
    <scope>IDENTIFICATION BY MASS SPECTROMETRY [LARGE SCALE ANALYSIS]</scope>
    <source>
        <tissue>Cervix carcinoma</tissue>
    </source>
</reference>
<reference key="16">
    <citation type="journal article" date="2009" name="Sci. Signal.">
        <title>Quantitative phosphoproteomic analysis of T cell receptor signaling reveals system-wide modulation of protein-protein interactions.</title>
        <authorList>
            <person name="Mayya V."/>
            <person name="Lundgren D.H."/>
            <person name="Hwang S.-I."/>
            <person name="Rezaul K."/>
            <person name="Wu L."/>
            <person name="Eng J.K."/>
            <person name="Rodionov V."/>
            <person name="Han D.K."/>
        </authorList>
    </citation>
    <scope>PHOSPHORYLATION [LARGE SCALE ANALYSIS] AT SER-578; THR-582; SER-588 AND THR-596</scope>
    <scope>IDENTIFICATION BY MASS SPECTROMETRY [LARGE SCALE ANALYSIS]</scope>
    <source>
        <tissue>Leukemic T-cell</tissue>
    </source>
</reference>
<reference key="17">
    <citation type="journal article" date="2009" name="Science">
        <title>Lysine acetylation targets protein complexes and co-regulates major cellular functions.</title>
        <authorList>
            <person name="Choudhary C."/>
            <person name="Kumar C."/>
            <person name="Gnad F."/>
            <person name="Nielsen M.L."/>
            <person name="Rehman M."/>
            <person name="Walther T.C."/>
            <person name="Olsen J.V."/>
            <person name="Mann M."/>
        </authorList>
    </citation>
    <scope>ACETYLATION [LARGE SCALE ANALYSIS] AT LYS-467</scope>
    <scope>IDENTIFICATION BY MASS SPECTROMETRY [LARGE SCALE ANALYSIS]</scope>
</reference>
<reference key="18">
    <citation type="journal article" date="2010" name="Sci. Signal.">
        <title>Quantitative phosphoproteomics reveals widespread full phosphorylation site occupancy during mitosis.</title>
        <authorList>
            <person name="Olsen J.V."/>
            <person name="Vermeulen M."/>
            <person name="Santamaria A."/>
            <person name="Kumar C."/>
            <person name="Miller M.L."/>
            <person name="Jensen L.J."/>
            <person name="Gnad F."/>
            <person name="Cox J."/>
            <person name="Jensen T.S."/>
            <person name="Nigg E.A."/>
            <person name="Brunak S."/>
            <person name="Mann M."/>
        </authorList>
    </citation>
    <scope>PHOSPHORYLATION [LARGE SCALE ANALYSIS] AT SER-588 AND THR-596</scope>
    <scope>IDENTIFICATION BY MASS SPECTROMETRY [LARGE SCALE ANALYSIS]</scope>
    <source>
        <tissue>Cervix carcinoma</tissue>
    </source>
</reference>
<reference key="19">
    <citation type="journal article" date="2011" name="BMC Syst. Biol.">
        <title>Initial characterization of the human central proteome.</title>
        <authorList>
            <person name="Burkard T.R."/>
            <person name="Planyavsky M."/>
            <person name="Kaupe I."/>
            <person name="Breitwieser F.P."/>
            <person name="Buerckstuemmer T."/>
            <person name="Bennett K.L."/>
            <person name="Superti-Furga G."/>
            <person name="Colinge J."/>
        </authorList>
    </citation>
    <scope>IDENTIFICATION BY MASS SPECTROMETRY [LARGE SCALE ANALYSIS]</scope>
</reference>
<reference key="20">
    <citation type="journal article" date="2011" name="Nature">
        <title>Structural basis for the subunit assembly of the anaphase-promoting complex.</title>
        <authorList>
            <person name="Schreiber A."/>
            <person name="Stengel F."/>
            <person name="Zhang Z."/>
            <person name="Enchev R.I."/>
            <person name="Kong E.H."/>
            <person name="Morris E.P."/>
            <person name="Robinson C.V."/>
            <person name="da Fonseca P.C."/>
            <person name="Barford D."/>
        </authorList>
    </citation>
    <scope>TPR REPEATS</scope>
</reference>
<reference key="21">
    <citation type="journal article" date="2011" name="Sci. Signal.">
        <title>System-wide temporal characterization of the proteome and phosphoproteome of human embryonic stem cell differentiation.</title>
        <authorList>
            <person name="Rigbolt K.T."/>
            <person name="Prokhorova T.A."/>
            <person name="Akimov V."/>
            <person name="Henningsen J."/>
            <person name="Johansen P.T."/>
            <person name="Kratchmarova I."/>
            <person name="Kassem M."/>
            <person name="Mann M."/>
            <person name="Olsen J.V."/>
            <person name="Blagoev B."/>
        </authorList>
    </citation>
    <scope>PHOSPHORYLATION [LARGE SCALE ANALYSIS] AT SER-588 AND THR-596</scope>
    <scope>IDENTIFICATION BY MASS SPECTROMETRY [LARGE SCALE ANALYSIS]</scope>
</reference>
<reference key="22">
    <citation type="journal article" date="2012" name="Proc. Natl. Acad. Sci. U.S.A.">
        <title>N-terminal acetylome analyses and functional insights of the N-terminal acetyltransferase NatB.</title>
        <authorList>
            <person name="Van Damme P."/>
            <person name="Lasa M."/>
            <person name="Polevoda B."/>
            <person name="Gazquez C."/>
            <person name="Elosegui-Artola A."/>
            <person name="Kim D.S."/>
            <person name="De Juan-Pardo E."/>
            <person name="Demeyer K."/>
            <person name="Hole K."/>
            <person name="Larrea E."/>
            <person name="Timmerman E."/>
            <person name="Prieto J."/>
            <person name="Arnesen T."/>
            <person name="Sherman F."/>
            <person name="Gevaert K."/>
            <person name="Aldabe R."/>
        </authorList>
    </citation>
    <scope>ACETYLATION [LARGE SCALE ANALYSIS] AT ALA-2</scope>
    <scope>CLEAVAGE OF INITIATOR METHIONINE [LARGE SCALE ANALYSIS]</scope>
    <scope>IDENTIFICATION BY MASS SPECTROMETRY [LARGE SCALE ANALYSIS]</scope>
</reference>
<reference key="23">
    <citation type="journal article" date="2013" name="J. Proteome Res.">
        <title>Toward a comprehensive characterization of a human cancer cell phosphoproteome.</title>
        <authorList>
            <person name="Zhou H."/>
            <person name="Di Palma S."/>
            <person name="Preisinger C."/>
            <person name="Peng M."/>
            <person name="Polat A.N."/>
            <person name="Heck A.J."/>
            <person name="Mohammed S."/>
        </authorList>
    </citation>
    <scope>PHOSPHORYLATION [LARGE SCALE ANALYSIS] AT SER-578; SER-588; SER-593 AND THR-596</scope>
    <scope>IDENTIFICATION BY MASS SPECTROMETRY [LARGE SCALE ANALYSIS]</scope>
    <source>
        <tissue>Cervix carcinoma</tissue>
        <tissue>Erythroleukemia</tissue>
    </source>
</reference>
<reference key="24">
    <citation type="journal article" date="2014" name="J. Proteomics">
        <title>An enzyme assisted RP-RPLC approach for in-depth analysis of human liver phosphoproteome.</title>
        <authorList>
            <person name="Bian Y."/>
            <person name="Song C."/>
            <person name="Cheng K."/>
            <person name="Dong M."/>
            <person name="Wang F."/>
            <person name="Huang J."/>
            <person name="Sun D."/>
            <person name="Wang L."/>
            <person name="Ye M."/>
            <person name="Zou H."/>
        </authorList>
    </citation>
    <scope>PHOSPHORYLATION [LARGE SCALE ANALYSIS] AT SER-588 AND THR-596</scope>
    <scope>IDENTIFICATION BY MASS SPECTROMETRY [LARGE SCALE ANALYSIS]</scope>
    <source>
        <tissue>Liver</tissue>
    </source>
</reference>
<reference key="25">
    <citation type="journal article" date="2014" name="Nat. Struct. Mol. Biol.">
        <title>Uncovering global SUMOylation signaling networks in a site-specific manner.</title>
        <authorList>
            <person name="Hendriks I.A."/>
            <person name="D'Souza R.C."/>
            <person name="Yang B."/>
            <person name="Verlaan-de Vries M."/>
            <person name="Mann M."/>
            <person name="Vertegaal A.C."/>
        </authorList>
    </citation>
    <scope>SUMOYLATION [LARGE SCALE ANALYSIS] AT LYS-147</scope>
    <scope>IDENTIFICATION BY MASS SPECTROMETRY [LARGE SCALE ANALYSIS]</scope>
</reference>
<reference key="26">
    <citation type="journal article" date="2017" name="Cell">
        <title>Assembly and function of heterotypic ubiquitin chains in cell-cycle and protein quality control.</title>
        <authorList>
            <person name="Yau R.G."/>
            <person name="Doerner K."/>
            <person name="Castellanos E.R."/>
            <person name="Haakonsen D.L."/>
            <person name="Werner A."/>
            <person name="Wang N."/>
            <person name="Yang X.W."/>
            <person name="Martinez-Martin N."/>
            <person name="Matsumoto M.L."/>
            <person name="Dixit V.M."/>
            <person name="Rape M."/>
        </authorList>
    </citation>
    <scope>FUNCTION</scope>
    <scope>PATHWAY</scope>
</reference>
<reference key="27">
    <citation type="journal article" date="2022" name="Clin. Genet.">
        <title>A homozygous loss-of-function mutation in FBXO43 causes human non-obstructive azoospermia.</title>
        <authorList>
            <person name="Wu H."/>
            <person name="Zhang X."/>
            <person name="Shen Q."/>
            <person name="Liu Y."/>
            <person name="Gao Y."/>
            <person name="Wang G."/>
            <person name="Lv M."/>
            <person name="Hua R."/>
            <person name="Xu Y."/>
            <person name="Zhou P."/>
            <person name="Wei Z."/>
            <person name="Tao F."/>
            <person name="He X."/>
            <person name="Cao Y."/>
            <person name="Liu M."/>
        </authorList>
    </citation>
    <scope>INTERACTION WITH FBXO43</scope>
</reference>
<reference key="28">
    <citation type="journal article" date="2017" name="Nat. Struct. Mol. Biol.">
        <title>Site-specific mapping of the human SUMO proteome reveals co-modification with phosphorylation.</title>
        <authorList>
            <person name="Hendriks I.A."/>
            <person name="Lyon D."/>
            <person name="Young C."/>
            <person name="Jensen L.J."/>
            <person name="Vertegaal A.C."/>
            <person name="Nielsen M.L."/>
        </authorList>
    </citation>
    <scope>SUMOYLATION [LARGE SCALE ANALYSIS] AT LYS-147</scope>
    <scope>IDENTIFICATION BY MASS SPECTROMETRY [LARGE SCALE ANALYSIS]</scope>
</reference>
<reference key="29">
    <citation type="journal article" date="2005" name="Mol. Cell">
        <title>Localization of the coactivator Cdh1 and the cullin subunit Apc2 in a cryo-electron microscopy model of vertebrate APC/C.</title>
        <authorList>
            <person name="Dube P."/>
            <person name="Herzog F."/>
            <person name="Gieffers C."/>
            <person name="Sander B."/>
            <person name="Riedel D."/>
            <person name="Mueller S.A."/>
            <person name="Engel A."/>
            <person name="Peters J.-M."/>
            <person name="Stark H."/>
        </authorList>
    </citation>
    <scope>STRUCTURE BY ELECTRON MICROSCOPY OF THE APC/C</scope>
</reference>
<reference key="30">
    <citation type="journal article" date="2014" name="Nature">
        <title>Molecular architecture and mechanism of the anaphase-promoting complex.</title>
        <authorList>
            <person name="Chang L."/>
            <person name="Zhang Z."/>
            <person name="Yang J."/>
            <person name="McLaughlin S.H."/>
            <person name="Barford D."/>
        </authorList>
    </citation>
    <scope>STRUCTURE BY ELECTRON MICROSCOPY (7.4 ANGSTROMS) OF THE APC/C</scope>
    <scope>SUBUNIT</scope>
</reference>
<reference evidence="12 13" key="31">
    <citation type="journal article" date="2015" name="Nature">
        <title>Atomic structure of the APC/C and its mechanism of protein ubiquitination.</title>
        <authorList>
            <person name="Chang L."/>
            <person name="Zhang Z."/>
            <person name="Yang J."/>
            <person name="McLaughlin S.H."/>
            <person name="Barford D."/>
        </authorList>
    </citation>
    <scope>STRUCTURE BY ELECTRON MICROSCOPY (3.60 ANGSTROMS) OF 7-597 OF APC/C</scope>
    <scope>SUBUNIT</scope>
    <scope>MUTAGENESIS OF ASN-339 AND GLU-374</scope>
</reference>
<proteinExistence type="evidence at protein level"/>